<dbReference type="EMBL" id="Z25587">
    <property type="protein sequence ID" value="CAA80996.1"/>
    <property type="molecule type" value="Genomic_DNA"/>
</dbReference>
<dbReference type="EMBL" id="Z25884">
    <property type="protein sequence ID" value="CAA81103.1"/>
    <property type="molecule type" value="mRNA"/>
</dbReference>
<dbReference type="EMBL" id="CH236959">
    <property type="protein sequence ID" value="EAL23786.1"/>
    <property type="molecule type" value="Genomic_DNA"/>
</dbReference>
<dbReference type="EMBL" id="BC112156">
    <property type="protein sequence ID" value="AAI12157.1"/>
    <property type="molecule type" value="mRNA"/>
</dbReference>
<dbReference type="EMBL" id="BC113495">
    <property type="protein sequence ID" value="AAI13496.1"/>
    <property type="molecule type" value="mRNA"/>
</dbReference>
<dbReference type="EMBL" id="M97820">
    <property type="status" value="NOT_ANNOTATED_CDS"/>
    <property type="molecule type" value="mRNA"/>
</dbReference>
<dbReference type="EMBL" id="L08261">
    <property type="status" value="NOT_ANNOTATED_CDS"/>
    <property type="molecule type" value="Genomic_DNA"/>
</dbReference>
<dbReference type="EMBL" id="L08262">
    <property type="status" value="NOT_ANNOTATED_CDS"/>
    <property type="molecule type" value="Genomic_DNA"/>
</dbReference>
<dbReference type="EMBL" id="L08263">
    <property type="status" value="NOT_ANNOTATED_CDS"/>
    <property type="molecule type" value="Genomic_DNA"/>
</dbReference>
<dbReference type="EMBL" id="L08264">
    <property type="status" value="NOT_ANNOTATED_CDS"/>
    <property type="molecule type" value="Genomic_DNA"/>
</dbReference>
<dbReference type="EMBL" id="L08265">
    <property type="status" value="NOT_ANNOTATED_CDS"/>
    <property type="molecule type" value="Genomic_DNA"/>
</dbReference>
<dbReference type="EMBL" id="Z25753">
    <property type="protein sequence ID" value="CAB56792.1"/>
    <property type="molecule type" value="Genomic_DNA"/>
</dbReference>
<dbReference type="EMBL" id="Z25754">
    <property type="protein sequence ID" value="CAB56792.1"/>
    <property type="status" value="JOINED"/>
    <property type="molecule type" value="Genomic_DNA"/>
</dbReference>
<dbReference type="EMBL" id="Z25755">
    <property type="protein sequence ID" value="CAB56792.1"/>
    <property type="status" value="JOINED"/>
    <property type="molecule type" value="Genomic_DNA"/>
</dbReference>
<dbReference type="EMBL" id="Z25756">
    <property type="protein sequence ID" value="CAB56792.1"/>
    <property type="status" value="JOINED"/>
    <property type="molecule type" value="Genomic_DNA"/>
</dbReference>
<dbReference type="EMBL" id="Z25757">
    <property type="protein sequence ID" value="CAB56792.1"/>
    <property type="status" value="JOINED"/>
    <property type="molecule type" value="Genomic_DNA"/>
</dbReference>
<dbReference type="EMBL" id="Z25758">
    <property type="protein sequence ID" value="CAB56792.1"/>
    <property type="status" value="JOINED"/>
    <property type="molecule type" value="Genomic_DNA"/>
</dbReference>
<dbReference type="EMBL" id="Z25759">
    <property type="protein sequence ID" value="CAB56792.1"/>
    <property type="status" value="JOINED"/>
    <property type="molecule type" value="Genomic_DNA"/>
</dbReference>
<dbReference type="EMBL" id="Z25760">
    <property type="protein sequence ID" value="CAB56792.1"/>
    <property type="status" value="JOINED"/>
    <property type="molecule type" value="Genomic_DNA"/>
</dbReference>
<dbReference type="EMBL" id="Z25761">
    <property type="protein sequence ID" value="CAB56792.1"/>
    <property type="status" value="JOINED"/>
    <property type="molecule type" value="Genomic_DNA"/>
</dbReference>
<dbReference type="EMBL" id="Z25762">
    <property type="protein sequence ID" value="CAB56792.1"/>
    <property type="status" value="JOINED"/>
    <property type="molecule type" value="Genomic_DNA"/>
</dbReference>
<dbReference type="EMBL" id="Z25763">
    <property type="protein sequence ID" value="CAB56792.1"/>
    <property type="status" value="JOINED"/>
    <property type="molecule type" value="Genomic_DNA"/>
</dbReference>
<dbReference type="EMBL" id="Z25764">
    <property type="protein sequence ID" value="CAB56792.1"/>
    <property type="status" value="JOINED"/>
    <property type="molecule type" value="Genomic_DNA"/>
</dbReference>
<dbReference type="EMBL" id="Z25765">
    <property type="protein sequence ID" value="CAB56792.1"/>
    <property type="status" value="JOINED"/>
    <property type="molecule type" value="Genomic_DNA"/>
</dbReference>
<dbReference type="EMBL" id="Z25766">
    <property type="protein sequence ID" value="CAB56792.1"/>
    <property type="status" value="JOINED"/>
    <property type="molecule type" value="Genomic_DNA"/>
</dbReference>
<dbReference type="EMBL" id="Z25767">
    <property type="protein sequence ID" value="CAB56792.1"/>
    <property type="status" value="JOINED"/>
    <property type="molecule type" value="Genomic_DNA"/>
</dbReference>
<dbReference type="EMBL" id="Z25752">
    <property type="protein sequence ID" value="CAB56792.1"/>
    <property type="status" value="JOINED"/>
    <property type="molecule type" value="Genomic_DNA"/>
</dbReference>
<dbReference type="EMBL" id="Z25768">
    <property type="protein sequence ID" value="CAB56814.1"/>
    <property type="molecule type" value="Genomic_DNA"/>
</dbReference>
<dbReference type="EMBL" id="Z25872">
    <property type="protein sequence ID" value="CAB56814.1"/>
    <property type="status" value="JOINED"/>
    <property type="molecule type" value="Genomic_DNA"/>
</dbReference>
<dbReference type="CCDS" id="CCDS5881.1"/>
<dbReference type="PIR" id="S37078">
    <property type="entry name" value="S37078"/>
</dbReference>
<dbReference type="RefSeq" id="NP_000074.3">
    <property type="nucleotide sequence ID" value="NM_000083.3"/>
</dbReference>
<dbReference type="PDB" id="6COY">
    <property type="method" value="EM"/>
    <property type="resolution" value="3.36 A"/>
    <property type="chains" value="A/B=1-988"/>
</dbReference>
<dbReference type="PDB" id="6COZ">
    <property type="method" value="EM"/>
    <property type="resolution" value="3.36 A"/>
    <property type="chains" value="A/B=1-988"/>
</dbReference>
<dbReference type="PDB" id="6QV6">
    <property type="method" value="EM"/>
    <property type="resolution" value="3.63 A"/>
    <property type="chains" value="A/B=1-988"/>
</dbReference>
<dbReference type="PDB" id="6QVB">
    <property type="method" value="EM"/>
    <property type="resolution" value="4.34 A"/>
    <property type="chains" value="A/B=1-988"/>
</dbReference>
<dbReference type="PDB" id="6QVC">
    <property type="method" value="EM"/>
    <property type="resolution" value="4.00 A"/>
    <property type="chains" value="A/B=1-988"/>
</dbReference>
<dbReference type="PDB" id="6QVD">
    <property type="method" value="EM"/>
    <property type="resolution" value="4.34 A"/>
    <property type="chains" value="A/B=1-988"/>
</dbReference>
<dbReference type="PDB" id="6QVU">
    <property type="method" value="EM"/>
    <property type="resolution" value="4.20 A"/>
    <property type="chains" value="A/B=1-988"/>
</dbReference>
<dbReference type="PDB" id="8WXI">
    <property type="method" value="EM"/>
    <property type="resolution" value="2.57 A"/>
    <property type="chains" value="A/B=1-988"/>
</dbReference>
<dbReference type="PDB" id="8WXJ">
    <property type="method" value="EM"/>
    <property type="resolution" value="2.68 A"/>
    <property type="chains" value="A/B=1-988"/>
</dbReference>
<dbReference type="PDBsum" id="6COY"/>
<dbReference type="PDBsum" id="6COZ"/>
<dbReference type="PDBsum" id="6QV6"/>
<dbReference type="PDBsum" id="6QVB"/>
<dbReference type="PDBsum" id="6QVC"/>
<dbReference type="PDBsum" id="6QVD"/>
<dbReference type="PDBsum" id="6QVU"/>
<dbReference type="PDBsum" id="8WXI"/>
<dbReference type="PDBsum" id="8WXJ"/>
<dbReference type="EMDB" id="EMD-37908"/>
<dbReference type="EMDB" id="EMD-37909"/>
<dbReference type="EMDB" id="EMD-4645"/>
<dbReference type="EMDB" id="EMD-4646"/>
<dbReference type="EMDB" id="EMD-4647"/>
<dbReference type="EMDB" id="EMD-4649"/>
<dbReference type="EMDB" id="EMD-4657"/>
<dbReference type="EMDB" id="EMD-7544"/>
<dbReference type="EMDB" id="EMD-7545"/>
<dbReference type="SMR" id="P35523"/>
<dbReference type="BioGRID" id="107594">
    <property type="interactions" value="13"/>
</dbReference>
<dbReference type="FunCoup" id="P35523">
    <property type="interactions" value="130"/>
</dbReference>
<dbReference type="IntAct" id="P35523">
    <property type="interactions" value="6"/>
</dbReference>
<dbReference type="MINT" id="P35523"/>
<dbReference type="STRING" id="9606.ENSP00000339867"/>
<dbReference type="BindingDB" id="P35523"/>
<dbReference type="GuidetoPHARMACOLOGY" id="698"/>
<dbReference type="TCDB" id="2.A.49.2.1">
    <property type="family name" value="the chloride carrier/channel (clc) family"/>
</dbReference>
<dbReference type="iPTMnet" id="P35523"/>
<dbReference type="PhosphoSitePlus" id="P35523"/>
<dbReference type="BioMuta" id="CLCN1"/>
<dbReference type="DMDM" id="311033468"/>
<dbReference type="jPOST" id="P35523"/>
<dbReference type="MassIVE" id="P35523"/>
<dbReference type="PaxDb" id="9606-ENSP00000339867"/>
<dbReference type="PeptideAtlas" id="P35523"/>
<dbReference type="ProteomicsDB" id="55076"/>
<dbReference type="Antibodypedia" id="32627">
    <property type="antibodies" value="150 antibodies from 23 providers"/>
</dbReference>
<dbReference type="DNASU" id="1180"/>
<dbReference type="Ensembl" id="ENST00000343257.7">
    <property type="protein sequence ID" value="ENSP00000339867.2"/>
    <property type="gene ID" value="ENSG00000188037.14"/>
</dbReference>
<dbReference type="GeneID" id="1180"/>
<dbReference type="KEGG" id="hsa:1180"/>
<dbReference type="MANE-Select" id="ENST00000343257.7">
    <property type="protein sequence ID" value="ENSP00000339867.2"/>
    <property type="RefSeq nucleotide sequence ID" value="NM_000083.3"/>
    <property type="RefSeq protein sequence ID" value="NP_000074.3"/>
</dbReference>
<dbReference type="UCSC" id="uc003wcr.2">
    <property type="organism name" value="human"/>
</dbReference>
<dbReference type="AGR" id="HGNC:2019"/>
<dbReference type="CTD" id="1180"/>
<dbReference type="DisGeNET" id="1180"/>
<dbReference type="GeneCards" id="CLCN1"/>
<dbReference type="GeneReviews" id="CLCN1"/>
<dbReference type="HGNC" id="HGNC:2019">
    <property type="gene designation" value="CLCN1"/>
</dbReference>
<dbReference type="HPA" id="ENSG00000188037">
    <property type="expression patterns" value="Tissue enriched (skeletal)"/>
</dbReference>
<dbReference type="MalaCards" id="CLCN1"/>
<dbReference type="MIM" id="118425">
    <property type="type" value="gene"/>
</dbReference>
<dbReference type="MIM" id="160800">
    <property type="type" value="phenotype"/>
</dbReference>
<dbReference type="MIM" id="255700">
    <property type="type" value="phenotype"/>
</dbReference>
<dbReference type="neXtProt" id="NX_P35523"/>
<dbReference type="OpenTargets" id="ENSG00000188037"/>
<dbReference type="Orphanet" id="614">
    <property type="disease" value="Thomsen and Becker disease"/>
</dbReference>
<dbReference type="PharmGKB" id="PA26546"/>
<dbReference type="VEuPathDB" id="HostDB:ENSG00000188037"/>
<dbReference type="eggNOG" id="KOG0476">
    <property type="taxonomic scope" value="Eukaryota"/>
</dbReference>
<dbReference type="GeneTree" id="ENSGT00940000157383"/>
<dbReference type="HOGENOM" id="CLU_006904_0_1_1"/>
<dbReference type="InParanoid" id="P35523"/>
<dbReference type="OMA" id="KHIGDPE"/>
<dbReference type="OrthoDB" id="4564at2759"/>
<dbReference type="PAN-GO" id="P35523">
    <property type="GO annotations" value="3 GO annotations based on evolutionary models"/>
</dbReference>
<dbReference type="PhylomeDB" id="P35523"/>
<dbReference type="TreeFam" id="TF352264"/>
<dbReference type="PathwayCommons" id="P35523"/>
<dbReference type="Reactome" id="R-HSA-2672351">
    <property type="pathway name" value="Stimuli-sensing channels"/>
</dbReference>
<dbReference type="SignaLink" id="P35523"/>
<dbReference type="BioGRID-ORCS" id="1180">
    <property type="hits" value="13 hits in 1139 CRISPR screens"/>
</dbReference>
<dbReference type="ChiTaRS" id="CLCN1">
    <property type="organism name" value="human"/>
</dbReference>
<dbReference type="GeneWiki" id="CLCN1"/>
<dbReference type="GenomeRNAi" id="1180"/>
<dbReference type="Pharos" id="P35523">
    <property type="development level" value="Tbio"/>
</dbReference>
<dbReference type="PRO" id="PR:P35523"/>
<dbReference type="Proteomes" id="UP000005640">
    <property type="component" value="Chromosome 7"/>
</dbReference>
<dbReference type="RNAct" id="P35523">
    <property type="molecule type" value="protein"/>
</dbReference>
<dbReference type="Bgee" id="ENSG00000188037">
    <property type="expression patterns" value="Expressed in hindlimb stylopod muscle and 94 other cell types or tissues"/>
</dbReference>
<dbReference type="ExpressionAtlas" id="P35523">
    <property type="expression patterns" value="baseline and differential"/>
</dbReference>
<dbReference type="GO" id="GO:0034707">
    <property type="term" value="C:chloride channel complex"/>
    <property type="evidence" value="ECO:0007669"/>
    <property type="project" value="UniProtKB-KW"/>
</dbReference>
<dbReference type="GO" id="GO:0005886">
    <property type="term" value="C:plasma membrane"/>
    <property type="evidence" value="ECO:0000314"/>
    <property type="project" value="UniProtKB"/>
</dbReference>
<dbReference type="GO" id="GO:0030315">
    <property type="term" value="C:T-tubule"/>
    <property type="evidence" value="ECO:0007669"/>
    <property type="project" value="UniProtKB-SubCell"/>
</dbReference>
<dbReference type="GO" id="GO:0042803">
    <property type="term" value="F:protein homodimerization activity"/>
    <property type="evidence" value="ECO:0000314"/>
    <property type="project" value="UniProtKB"/>
</dbReference>
<dbReference type="GO" id="GO:0005247">
    <property type="term" value="F:voltage-gated chloride channel activity"/>
    <property type="evidence" value="ECO:0000315"/>
    <property type="project" value="UniProtKB"/>
</dbReference>
<dbReference type="GO" id="GO:1902476">
    <property type="term" value="P:chloride transmembrane transport"/>
    <property type="evidence" value="ECO:0000315"/>
    <property type="project" value="UniProtKB"/>
</dbReference>
<dbReference type="GO" id="GO:0006821">
    <property type="term" value="P:chloride transport"/>
    <property type="evidence" value="ECO:0000318"/>
    <property type="project" value="GO_Central"/>
</dbReference>
<dbReference type="GO" id="GO:0006936">
    <property type="term" value="P:muscle contraction"/>
    <property type="evidence" value="ECO:0000315"/>
    <property type="project" value="UniProtKB"/>
</dbReference>
<dbReference type="GO" id="GO:0019227">
    <property type="term" value="P:neuronal action potential propagation"/>
    <property type="evidence" value="ECO:0007669"/>
    <property type="project" value="Ensembl"/>
</dbReference>
<dbReference type="CDD" id="cd03683">
    <property type="entry name" value="ClC_1_like"/>
    <property type="match status" value="1"/>
</dbReference>
<dbReference type="FunFam" id="1.10.3080.10:FF:000003">
    <property type="entry name" value="Chloride channel 2"/>
    <property type="match status" value="1"/>
</dbReference>
<dbReference type="FunFam" id="3.10.580.10:FF:000027">
    <property type="entry name" value="Chloride channel protein"/>
    <property type="match status" value="1"/>
</dbReference>
<dbReference type="FunFam" id="3.10.580.10:FF:000030">
    <property type="entry name" value="Chloride channel protein"/>
    <property type="match status" value="1"/>
</dbReference>
<dbReference type="Gene3D" id="3.10.580.10">
    <property type="entry name" value="CBS-domain"/>
    <property type="match status" value="2"/>
</dbReference>
<dbReference type="Gene3D" id="1.10.3080.10">
    <property type="entry name" value="Clc chloride channel"/>
    <property type="match status" value="1"/>
</dbReference>
<dbReference type="InterPro" id="IPR046342">
    <property type="entry name" value="CBS_dom_sf"/>
</dbReference>
<dbReference type="InterPro" id="IPR014743">
    <property type="entry name" value="Cl-channel_core"/>
</dbReference>
<dbReference type="InterPro" id="IPR002243">
    <property type="entry name" value="Cl_channel-1"/>
</dbReference>
<dbReference type="InterPro" id="IPR050970">
    <property type="entry name" value="Cl_channel_volt-gated"/>
</dbReference>
<dbReference type="InterPro" id="IPR001807">
    <property type="entry name" value="ClC"/>
</dbReference>
<dbReference type="PANTHER" id="PTHR45720:SF4">
    <property type="entry name" value="CHLORIDE CHANNEL PROTEIN 1"/>
    <property type="match status" value="1"/>
</dbReference>
<dbReference type="PANTHER" id="PTHR45720">
    <property type="entry name" value="CHLORIDE CHANNEL PROTEIN 2"/>
    <property type="match status" value="1"/>
</dbReference>
<dbReference type="Pfam" id="PF00654">
    <property type="entry name" value="Voltage_CLC"/>
    <property type="match status" value="1"/>
</dbReference>
<dbReference type="PRINTS" id="PR00762">
    <property type="entry name" value="CLCHANNEL"/>
</dbReference>
<dbReference type="PRINTS" id="PR01112">
    <property type="entry name" value="CLCHANNEL1"/>
</dbReference>
<dbReference type="SUPFAM" id="SSF54631">
    <property type="entry name" value="CBS-domain pair"/>
    <property type="match status" value="1"/>
</dbReference>
<dbReference type="SUPFAM" id="SSF81340">
    <property type="entry name" value="Clc chloride channel"/>
    <property type="match status" value="1"/>
</dbReference>
<dbReference type="PROSITE" id="PS51371">
    <property type="entry name" value="CBS"/>
    <property type="match status" value="2"/>
</dbReference>
<gene>
    <name evidence="44 50" type="primary">CLCN1</name>
    <name type="synonym">CLC1</name>
</gene>
<sequence>MEQSRSQQRGGEQSWWGSDPQYQYMPFEHCTSYGLPSENGGLQHRLRKDAGPRHNVHPTQIYGHHKEQFSDREQDIGMPKKTGSSSTVDSKDEDHYSKCQDCIHRLGQVVRRKLGEDGIFLVLLGLLMALVSWSMDYVSAKSLQAYKWSYAQMQPSLPLQFLVWVTFPLVLILFSALFCHLISPQAVGSGIPEMKTILRGVVLKEYLTMKAFVAKVVALTAGLGSGIPVGKEGPFVHIASICAAVLSKFMSVFCGVYEQPYYYSDILTVGCAVGVGCCFGTPLGGVLFSIEVTSTYFAVRNYWRGFFAATFSAFVFRVLAVWNKDAVTITALFRTNFRMDFPFDLKELPAFAAIGICCGLLGAVFVYLHRQVMLGVRKHKALSQFLAKHRLLYPGIVTFVIASFTFPPGMGQFMAGELMPREAISTLFDNNTWVKHAGDPESLGQSAVWIHPRVNVVIIIFLFFVMKFWMSIVATTMPIPCGGFMPVFVLGAAFGRLVGEIMAMLFPDGILFDDIIYKILPGGYAVIGAAALTGAVSHTVSTAVICFELTGQIAHILPMMVAVILANMVAQSLQPSLYDSIIQVKKLPYLPDLGWNQLSKYTIFVEDIMVRDVKFVSASYTYGELRTLLQTTTVKTLPLVDSKDSMILLGSVERSELQALLQRHLCPERRLRAAQEMARKLSELPYDGKARLAGEGLPGAPPGRPESFAFVDEDEDEDLSGKSELPPSLALHPSTTAPLSPEEPNGPLPGHKQQPEAPEPAGQRPSIFQSLLHCLLGRARPTKKKTTQDSTDLVDNMSPEEIEAWEQEQLSQPVCFDSCCIDQSPFQLVEQTTLHKTHTLFSLLGLHLAYVTSMGKLRGVLALEELQKAIEGHTKSGVQLRPPLASFRNTTSTRKSTGAPPSSAENWNLPEDRPGATGTGDVIAASPETPVPSPSPEPPLSLAPGKVEGELEELELVESPGLEEELADILQGPSLRSTDEEDEDELIL</sequence>
<reference key="1">
    <citation type="journal article" date="1994" name="EMBO J.">
        <title>Multimeric structure of ClC-1 chloride channel revealed by mutations in dominant myotonia congenita (Thomsen).</title>
        <authorList>
            <person name="Steinmeyer K."/>
            <person name="Lorenz C."/>
            <person name="Pusch M."/>
            <person name="Koch M.C."/>
            <person name="Jentsch T.J."/>
        </authorList>
    </citation>
    <scope>NUCLEOTIDE SEQUENCE [GENOMIC DNA / MRNA]</scope>
    <scope>VARIANT MCAD LEU-480</scope>
    <scope>VARIANT GLN-300</scope>
    <scope>CHARACTERIZATION OF VARIANTS MCAD GLU-230 AND LEU-480</scope>
    <scope>CHARACTERIZATION OF VARIANT GLN-300</scope>
    <scope>FUNCTION</scope>
    <scope>TRANSPORTER ACTIVITY</scope>
    <scope>SUBUNIT</scope>
    <scope>SUBCELLULAR LOCATION</scope>
</reference>
<reference key="2">
    <citation type="journal article" date="2003" name="Science">
        <title>Human chromosome 7: DNA sequence and biology.</title>
        <authorList>
            <person name="Scherer S.W."/>
            <person name="Cheung J."/>
            <person name="MacDonald J.R."/>
            <person name="Osborne L.R."/>
            <person name="Nakabayashi K."/>
            <person name="Herbrick J.-A."/>
            <person name="Carson A.R."/>
            <person name="Parker-Katiraee L."/>
            <person name="Skaug J."/>
            <person name="Khaja R."/>
            <person name="Zhang J."/>
            <person name="Hudek A.K."/>
            <person name="Li M."/>
            <person name="Haddad M."/>
            <person name="Duggan G.E."/>
            <person name="Fernandez B.A."/>
            <person name="Kanematsu E."/>
            <person name="Gentles S."/>
            <person name="Christopoulos C.C."/>
            <person name="Choufani S."/>
            <person name="Kwasnicka D."/>
            <person name="Zheng X.H."/>
            <person name="Lai Z."/>
            <person name="Nusskern D.R."/>
            <person name="Zhang Q."/>
            <person name="Gu Z."/>
            <person name="Lu F."/>
            <person name="Zeesman S."/>
            <person name="Nowaczyk M.J."/>
            <person name="Teshima I."/>
            <person name="Chitayat D."/>
            <person name="Shuman C."/>
            <person name="Weksberg R."/>
            <person name="Zackai E.H."/>
            <person name="Grebe T.A."/>
            <person name="Cox S.R."/>
            <person name="Kirkpatrick S.J."/>
            <person name="Rahman N."/>
            <person name="Friedman J.M."/>
            <person name="Heng H.H.Q."/>
            <person name="Pelicci P.G."/>
            <person name="Lo-Coco F."/>
            <person name="Belloni E."/>
            <person name="Shaffer L.G."/>
            <person name="Pober B."/>
            <person name="Morton C.C."/>
            <person name="Gusella J.F."/>
            <person name="Bruns G.A.P."/>
            <person name="Korf B.R."/>
            <person name="Quade B.J."/>
            <person name="Ligon A.H."/>
            <person name="Ferguson H."/>
            <person name="Higgins A.W."/>
            <person name="Leach N.T."/>
            <person name="Herrick S.R."/>
            <person name="Lemyre E."/>
            <person name="Farra C.G."/>
            <person name="Kim H.-G."/>
            <person name="Summers A.M."/>
            <person name="Gripp K.W."/>
            <person name="Roberts W."/>
            <person name="Szatmari P."/>
            <person name="Winsor E.J.T."/>
            <person name="Grzeschik K.-H."/>
            <person name="Teebi A."/>
            <person name="Minassian B.A."/>
            <person name="Kere J."/>
            <person name="Armengol L."/>
            <person name="Pujana M.A."/>
            <person name="Estivill X."/>
            <person name="Wilson M.D."/>
            <person name="Koop B.F."/>
            <person name="Tosi S."/>
            <person name="Moore G.E."/>
            <person name="Boright A.P."/>
            <person name="Zlotorynski E."/>
            <person name="Kerem B."/>
            <person name="Kroisel P.M."/>
            <person name="Petek E."/>
            <person name="Oscier D.G."/>
            <person name="Mould S.J."/>
            <person name="Doehner H."/>
            <person name="Doehner K."/>
            <person name="Rommens J.M."/>
            <person name="Vincent J.B."/>
            <person name="Venter J.C."/>
            <person name="Li P.W."/>
            <person name="Mural R.J."/>
            <person name="Adams M.D."/>
            <person name="Tsui L.-C."/>
        </authorList>
    </citation>
    <scope>NUCLEOTIDE SEQUENCE [LARGE SCALE GENOMIC DNA]</scope>
</reference>
<reference key="3">
    <citation type="journal article" date="2004" name="Genome Res.">
        <title>The status, quality, and expansion of the NIH full-length cDNA project: the Mammalian Gene Collection (MGC).</title>
        <authorList>
            <consortium name="The MGC Project Team"/>
        </authorList>
    </citation>
    <scope>NUCLEOTIDE SEQUENCE [LARGE SCALE MRNA]</scope>
    <scope>VARIANT TRP-118</scope>
</reference>
<reference key="4">
    <citation type="journal article" date="1992" name="Science">
        <title>The skeletal muscle chloride channel in dominant and recessive human myotonia.</title>
        <authorList>
            <person name="Koch M.C."/>
            <person name="Steinmeyer K."/>
            <person name="Lorenz C."/>
            <person name="Ricker K."/>
            <person name="Wolf F."/>
            <person name="Otto M."/>
            <person name="Zoll B."/>
            <person name="Lehmann-Horn F."/>
            <person name="Grzeschik K.-H."/>
            <person name="Jentsch T.J."/>
        </authorList>
    </citation>
    <scope>NUCLEOTIDE SEQUENCE [MRNA] OF 171-988</scope>
    <scope>VARIANT MCAR CYS-413</scope>
</reference>
<reference key="5">
    <citation type="journal article" date="1993" name="Nat. Genet.">
        <title>Molecular basis of Thomsen's disease (autosomal dominant myotonia congenita).</title>
        <authorList>
            <person name="George A.L. Jr."/>
            <person name="Crackower M.A."/>
            <person name="Abdalla J.A."/>
            <person name="Hudson A.J."/>
            <person name="Ebers G.C."/>
        </authorList>
    </citation>
    <scope>PARTIAL NUCLEOTIDE SEQUENCE [GENOMIC DNA / MRNA]</scope>
    <scope>VARIANT MCAD GLU-230</scope>
</reference>
<reference key="6">
    <citation type="journal article" date="1994" name="Biophys. J.">
        <title>Low single channel conductance of the major skeletal muscle chloride channel, ClC-1.</title>
        <authorList>
            <person name="Pusch M."/>
            <person name="Steinmeyer K."/>
            <person name="Jentsch T.J."/>
        </authorList>
    </citation>
    <scope>FUNCTION</scope>
    <scope>TRANSPORTER ACTIVITY</scope>
</reference>
<reference key="7">
    <citation type="journal article" date="1997" name="Proc. Natl. Acad. Sci. U.S.A.">
        <title>A mutation in autosomal dominant myotonia congenita affects pore properties of the muscle chloride channel.</title>
        <authorList>
            <person name="Fahlke C."/>
            <person name="Beck C.L."/>
            <person name="George A.L. Jr."/>
        </authorList>
    </citation>
    <scope>FUNCTION</scope>
    <scope>TRANSPORTER ACTIVITY</scope>
    <scope>SUBCELLULAR LOCATION</scope>
    <scope>CHARACTERIZATION OF VARIANT MCAD GLU-230</scope>
</reference>
<reference key="8">
    <citation type="journal article" date="1998" name="J. Gen. Physiol.">
        <title>Permeation and block of the skeletal muscle chloride channel, ClC-1, by foreign anions.</title>
        <authorList>
            <person name="Rychkov G.Y."/>
            <person name="Pusch M."/>
            <person name="Roberts M.L."/>
            <person name="Jentsch T.J."/>
            <person name="Bretag A.H."/>
        </authorList>
    </citation>
    <scope>FUNCTION</scope>
    <scope>TRANSPORTER ACTIVITY</scope>
</reference>
<reference key="9">
    <citation type="journal article" date="1999" name="J. Gen. Physiol.">
        <title>The muscle chloride channel ClC-1 has a double-barreled appearance that is differentially affected in dominant and recessive myotonia.</title>
        <authorList>
            <person name="Saviane C."/>
            <person name="Conti F."/>
            <person name="Pusch M."/>
        </authorList>
    </citation>
    <scope>FUNCTION</scope>
    <scope>ACTIVITY REGULATION</scope>
    <scope>CHARACTERIZATION OF VARIANT MCAD MET-290</scope>
    <scope>CHARACTERIZATION OF VARIANT MCAD/MCAR ASN-556</scope>
</reference>
<reference key="10">
    <citation type="journal article" date="2000" name="J. Gen. Physiol.">
        <title>Fast and slow gating relaxations in the muscle chloride channel CLC-1.</title>
        <authorList>
            <person name="Accardi A."/>
            <person name="Pusch M."/>
        </authorList>
    </citation>
    <scope>FUNCTION</scope>
    <scope>CHARACTERIZATION OF VARIANT MCAD MET-290</scope>
</reference>
<reference key="11">
    <citation type="journal article" date="2002" name="J. Physiol. (Lond.)">
        <title>A novel alteration of muscle chloride channel gating in myotonia levior.</title>
        <authorList>
            <person name="Ryan A."/>
            <person name="Ruedel R."/>
            <person name="Kuchenbecker M."/>
            <person name="Fahlke C."/>
        </authorList>
    </citation>
    <scope>FUNCTION</scope>
    <scope>SUBCELLULAR LOCATION</scope>
    <scope>CHARACTERIZATION OF VARIANT MYOTONIA LEVIOR ARG-552</scope>
</reference>
<reference key="12">
    <citation type="journal article" date="2005" name="J. Biol. Chem.">
        <title>Cytoplasmic ATP-sensing domains regulate gating of skeletal muscle ClC-1 chloride channels.</title>
        <authorList>
            <person name="Bennetts B."/>
            <person name="Rychkov G.Y."/>
            <person name="Ng H.L."/>
            <person name="Morton C.J."/>
            <person name="Stapleton D."/>
            <person name="Parker M.W."/>
            <person name="Cromer B.A."/>
        </authorList>
    </citation>
    <scope>FUNCTION</scope>
    <scope>ACTIVITY REGULATION</scope>
    <scope>MUTAGENESIS OF THR-636; PRO-638; SER-651; HIS-847; LEU-848 AND ALA-849</scope>
</reference>
<reference key="13">
    <citation type="journal article" date="2023" name="Biomedicines">
        <title>ClC-1 Chloride Channel: Inputs on the Structure-Function Relationship of Myotonia Congenita-Causing Mutations.</title>
        <authorList>
            <person name="Brenes O."/>
            <person name="Pusch M."/>
            <person name="Morales F."/>
        </authorList>
    </citation>
    <scope>REVIEW</scope>
    <scope>TOPOLOGY</scope>
</reference>
<reference key="14">
    <citation type="journal article" date="2018" name="Elife">
        <title>Structure of the CLC-1 chloride channel from Homo sapiens.</title>
        <authorList>
            <person name="Park E."/>
            <person name="MacKinnon R."/>
        </authorList>
    </citation>
    <scope>STRUCTURE BY ELECTRON MICROSCOPY (3.36 ANGSTROMS)</scope>
    <scope>SUBUNIT</scope>
    <scope>TOPOLOGY</scope>
    <scope>FUNCTION</scope>
    <scope>SITE</scope>
</reference>
<reference key="15">
    <citation type="journal article" date="2019" name="PLoS Biol.">
        <title>Structure of the human ClC-1 chloride channel.</title>
        <authorList>
            <person name="Wang K."/>
            <person name="Preisler S.S."/>
            <person name="Zhang L."/>
            <person name="Cui Y."/>
            <person name="Missel J.W."/>
            <person name="Gronberg C."/>
            <person name="Gotfryd K."/>
            <person name="Lindahl E."/>
            <person name="Andersson M."/>
            <person name="Calloe K."/>
            <person name="Egea P.F."/>
            <person name="Klaerke D.A."/>
            <person name="Pusch M."/>
            <person name="Pedersen P.A."/>
            <person name="Zhou Z.H."/>
            <person name="Gourdon P."/>
        </authorList>
    </citation>
    <scope>STRUCTURE BY ELECTRON MICROSCOPY (3.63 ANGSTROMS)</scope>
    <scope>SUBUNIT</scope>
    <scope>TOPOLOGY</scope>
    <scope>FUNCTION</scope>
    <scope>TRANSPORTER ACTIVITY</scope>
    <scope>ACTIVITY REGULATION</scope>
</reference>
<reference key="16">
    <citation type="journal article" date="1994" name="Hum. Mol. Genet.">
        <title>Genomic organization of the human muscle chloride channel ClC-1 and analysis of novel mutations leading to Becker-type myotonia.</title>
        <authorList>
            <person name="Lorenz C."/>
            <person name="Meyer-Kleine C."/>
            <person name="Steinmeyer K."/>
            <person name="Koch M.C."/>
            <person name="Jentsch T.J."/>
        </authorList>
    </citation>
    <scope>VARIANTS MCAR ILE-327; CYS-413 AND SER-496</scope>
    <scope>CHARACTERIZATION OF VARIANTS MCAR ILE-327 AND SER-496</scope>
    <scope>FUNCTION</scope>
</reference>
<reference key="17">
    <citation type="journal article" date="1994" name="Hum. Mol. Genet.">
        <title>Proof of a non-functional muscle chloride channel in recessive myotonia congenita (Becker) by detection of a 4 base pair deletion.</title>
        <authorList>
            <person name="Heine R."/>
            <person name="George A.L. Jr."/>
            <person name="Pika U."/>
            <person name="Deymeer F."/>
            <person name="Ruedel R."/>
            <person name="Lehmann-Horn F."/>
        </authorList>
    </citation>
    <scope>VARIANT MCAR GLY-136</scope>
</reference>
<reference key="18">
    <citation type="journal article" date="1994" name="Hum. Mol. Genet.">
        <title>Nonsense and missense mutations of the muscle chloride channel gene in patients with myotonia congenita.</title>
        <authorList>
            <person name="George A.L. Jr."/>
            <person name="Sloan-Brown K."/>
            <person name="Fenichel G.M."/>
            <person name="Mitchell G.A."/>
            <person name="Spiegel R."/>
            <person name="Pascuzzi R.M."/>
        </authorList>
    </citation>
    <scope>VARIANTS MCAR LEU-167 AND GLN-338</scope>
    <scope>VARIANT GLN-300</scope>
</reference>
<reference key="19">
    <citation type="journal article" date="1995" name="Am. J. Hum. Genet.">
        <title>Spectrum of mutations in the major human skeletal muscle chloride channel gene (CLCN1) leading to myotonia.</title>
        <authorList>
            <person name="Meyer-Kleine C."/>
            <person name="Steinmeyer K."/>
            <person name="Ricker K."/>
            <person name="Jentsch T.J."/>
            <person name="Koch M.C."/>
        </authorList>
    </citation>
    <scope>VARIANTS MCAR CYS-105; GLY-136; GLY-165; LEU-167; LYS-291; THR-329; CYS-413; ARG-482 AND VAL-485</scope>
    <scope>VARIANT MCAD GLN-317</scope>
</reference>
<reference key="20">
    <citation type="journal article" date="1995" name="Hum. Mol. Genet.">
        <title>Myotonia levior is a chloride channel disorder.</title>
        <authorList>
            <person name="Lehmann-Horn F."/>
            <person name="Mailaender V."/>
            <person name="Heine R."/>
            <person name="George A.L. Jr."/>
        </authorList>
    </citation>
    <scope>VARIANT MCAD MET-290</scope>
    <scope>VARIANT MYOTONIA LEVIOR ARG-552</scope>
    <scope>VARIANT TRP-118</scope>
</reference>
<reference key="21">
    <citation type="journal article" date="1995" name="Neuron">
        <title>Mutations in dominant human myotonia congenita drastically alter the voltage dependence of the CIC-1 chloride channel.</title>
        <authorList>
            <person name="Pusch M."/>
            <person name="Steinmeyer K."/>
            <person name="Koch M.C."/>
            <person name="Jentsch T.J."/>
        </authorList>
    </citation>
    <scope>VARIANT MCAD MET-290</scope>
    <scope>VARIANT MCAR LYS-291</scope>
    <scope>CHARACTERIZATION OF VARIANTS MCAD MET-290; GLN-317 AND LEU-480</scope>
    <scope>CHARACTERIZATION OF VARIANT MCAR LYS-291</scope>
    <scope>CHARACTERIZATION OF VARIANT MYOTONIA LEVIOR ARG-552</scope>
    <scope>MUTAGENESIS OF ILE-290 AND GLU-291</scope>
</reference>
<reference key="22">
    <citation type="journal article" date="1996" name="Am. J. Hum. Genet.">
        <title>Novel muscle chloride channel mutations and their effects on heterozygous carriers.</title>
        <authorList>
            <person name="Mailaender V."/>
            <person name="Heine R."/>
            <person name="Deymeer F."/>
            <person name="Lehmann-Horn F."/>
        </authorList>
    </citation>
    <scope>VARIANTS MCAR CYS-150; ARG-200; CYS-261 AND VAL-415</scope>
</reference>
<reference key="23">
    <citation type="journal article" date="1998" name="Hum. Mol. Genet.">
        <title>ClC-1 chloride channel mutations in myotonia congenita: variable penetrance of mutations shifting the voltage dependence.</title>
        <authorList>
            <person name="Kubisch C."/>
            <person name="Schmidt-Rose T."/>
            <person name="Fontaine B."/>
            <person name="Bretag A.H."/>
            <person name="Jentsch T.J."/>
        </authorList>
    </citation>
    <scope>VARIANTS MCAD/MCAR LEU-236; GLU-285; ALA-286; SER-307; VAL-485 AND ASN-556</scope>
    <scope>CHARACTERIZATION OF VARIANTS MCAD/MCAR LEU-236; GLU-285; ALA-286; SER-307 AND ASN-556</scope>
    <scope>FUNCTION</scope>
</reference>
<reference key="24">
    <citation type="journal article" date="1998" name="Hum. Mutat.">
        <title>Identification of five new mutations and three novel polymorphisms in the muscle chloride channel gene (CLCN1) in 20 Italian patients with dominant and recessive myotonia congenita.</title>
        <authorList>
            <person name="Sangiuolo F."/>
            <person name="Botta A."/>
            <person name="Mesoraca A."/>
            <person name="Servidei S."/>
            <person name="Merlini L."/>
            <person name="Fratta G."/>
            <person name="Novelli G."/>
            <person name="Dallapiccola B."/>
        </authorList>
    </citation>
    <scope>VARIANTS MCAR ILE-563 AND LEU-708</scope>
</reference>
<reference key="25">
    <citation type="journal article" date="1998" name="Neurology">
        <title>Novel muscle chloride channel (CLCN1) mutations in myotonia congenita with various modes of inheritance including incomplete dominance and penetrance.</title>
        <authorList>
            <person name="Plassart-Schiess E."/>
            <person name="Gervais A."/>
            <person name="Eymard B."/>
            <person name="Lagueny A."/>
            <person name="Pouget J."/>
            <person name="Warter J.-M."/>
            <person name="Fardeau M."/>
            <person name="Jentsch T.J."/>
            <person name="Fontaine B."/>
        </authorList>
    </citation>
    <scope>VARIANTS MCAD/MCAR VAL-161; THR-313 AND ASN-556</scope>
</reference>
<reference key="26">
    <citation type="journal article" date="2000" name="J. Biol. Chem.">
        <title>Mechanism of inverted activation of ClC-1 channels caused by a novel myotonia congenita mutation.</title>
        <authorList>
            <person name="Zhang J."/>
            <person name="Sanguinetti M.C."/>
            <person name="Kwiecinski H."/>
            <person name="Ptacek L.J."/>
        </authorList>
    </citation>
    <scope>VARIANT MCAR ARG-499</scope>
    <scope>CHARACTERIZATION OF VARIANT MCAR ARG-499</scope>
    <scope>MUTAGENESIS OF ARG-496; GLY-499 AND GLU-500</scope>
</reference>
<reference key="27">
    <citation type="journal article" date="2000" name="Neurology">
        <title>A 'dystrophic' variant of autosomal recessive myotonia congenita caused by novel mutations in the CLCN1 gene.</title>
        <authorList>
            <person name="Nagamitsu S."/>
            <person name="Matsuura T."/>
            <person name="Khajavi M."/>
            <person name="Armstrong R."/>
            <person name="Gooch C."/>
            <person name="Harati Y."/>
            <person name="Ashizawa T."/>
        </authorList>
    </citation>
    <scope>VARIANT MCAR LEU-932</scope>
</reference>
<reference key="28">
    <citation type="journal article" date="2003" name="Muscle Nerve">
        <title>Decrement of compound muscle action potential is related to mutation type in myotonia congenita.</title>
        <authorList>
            <person name="Colding-Joergensen E."/>
            <person name="DunOe M."/>
            <person name="Schwartz M."/>
            <person name="Vissing J."/>
        </authorList>
    </citation>
    <scope>VARIANTS MCAD VAL-128; LYS-193; SER-307 AND LEU-480</scope>
    <scope>VARIANT MCAR GLU-285</scope>
    <scope>VARIANTS THR-437 AND ASN-614</scope>
</reference>
<reference key="29">
    <citation type="journal article" date="2006" name="Science">
        <title>The consensus coding sequences of human breast and colorectal cancers.</title>
        <authorList>
            <person name="Sjoeblom T."/>
            <person name="Jones S."/>
            <person name="Wood L.D."/>
            <person name="Parsons D.W."/>
            <person name="Lin J."/>
            <person name="Barber T.D."/>
            <person name="Mandelker D."/>
            <person name="Leary R.J."/>
            <person name="Ptak J."/>
            <person name="Silliman N."/>
            <person name="Szabo S."/>
            <person name="Buckhaults P."/>
            <person name="Farrell C."/>
            <person name="Meeh P."/>
            <person name="Markowitz S.D."/>
            <person name="Willis J."/>
            <person name="Dawson D."/>
            <person name="Willson J.K.V."/>
            <person name="Gazdar A.F."/>
            <person name="Hartigan J."/>
            <person name="Wu L."/>
            <person name="Liu C."/>
            <person name="Parmigiani G."/>
            <person name="Park B.H."/>
            <person name="Bachman K.E."/>
            <person name="Papadopoulos N."/>
            <person name="Vogelstein B."/>
            <person name="Kinzler K.W."/>
            <person name="Velculescu V.E."/>
        </authorList>
    </citation>
    <scope>VARIANT [LARGE SCALE ANALYSIS] LYS-548</scope>
</reference>
<reference key="30">
    <citation type="journal article" date="2010" name="Muscle Nerve">
        <title>Myotonia congenita in a large consanguineous Arab family: insight into the clinical spectrum of carriers and double heterozygotes of a novel mutation in the chloride channel CLCN1 gene.</title>
        <authorList>
            <person name="Shalata A."/>
            <person name="Furman H."/>
            <person name="Adir V."/>
            <person name="Adir N."/>
            <person name="Hujeirat Y."/>
            <person name="Shalev S.A."/>
            <person name="Borochowitz Z.U."/>
        </authorList>
    </citation>
    <scope>VARIANT MCAR SER-190</scope>
</reference>
<reference key="31">
    <citation type="journal article" date="2012" name="J. Neurol. Sci.">
        <title>Myotonia congenita: novel mutations in CLCN1 gene and functional characterizations in Italian patients.</title>
        <authorList>
            <person name="Ulzi G."/>
            <person name="Lecchi M."/>
            <person name="Sansone V."/>
            <person name="Redaelli E."/>
            <person name="Corti E."/>
            <person name="Saccomanno D."/>
            <person name="Pagliarani S."/>
            <person name="Corti S."/>
            <person name="Magri F."/>
            <person name="Raimondi M."/>
            <person name="D'Angelo G."/>
            <person name="Modoni A."/>
            <person name="Bresolin N."/>
            <person name="Meola G."/>
            <person name="Wanke E."/>
            <person name="Comi G.P."/>
            <person name="Lucchiari S."/>
        </authorList>
    </citation>
    <scope>VARIANTS MCAR ARG-164; ARG-197; ILE-533; LEU-536; SER-845 AND GLU-947</scope>
    <scope>CHARACTERIZATION OF VARIANTS MCAR ARG-164; SER-190; ARG-197 AND SER-845</scope>
    <scope>FUNCTION</scope>
</reference>
<reference key="32">
    <citation type="journal article" date="2012" name="J. Physiol. (Lond.)">
        <title>Disease-causing mutations C277R and C277Y modify gating of human ClC-1 chloride channels in myotonia congenita.</title>
        <authorList>
            <person name="Weinberger S."/>
            <person name="Wojciechowski D."/>
            <person name="Sternberg D."/>
            <person name="Lehmann-Horn F."/>
            <person name="Jurkat-Rott K."/>
            <person name="Becher T."/>
            <person name="Begemann B."/>
            <person name="Fahlke C."/>
            <person name="Fischer M."/>
        </authorList>
    </citation>
    <scope>VARIANTS MCAR LEU-167; ARG-277; TYR-277 AND THR-527</scope>
    <scope>CHARACTERIZATION OF VARIANTS MCAR ARG-277 AND TYR-277</scope>
    <scope>FUNCTION</scope>
    <scope>TRANSPORTER ACTIVITY</scope>
</reference>
<reference key="33">
    <citation type="journal article" date="2015" name="J. Physiol. (Lond.)">
        <title>ClC-1 mutations in myotonia congenita patients: insights into molecular gating mechanisms and genotype-phenotype correlation.</title>
        <authorList>
            <person name="Imbrici P."/>
            <person name="Maggi L."/>
            <person name="Mangiatordi G.F."/>
            <person name="Dinardo M.M."/>
            <person name="Altamura C."/>
            <person name="Brugnoni R."/>
            <person name="Alberga D."/>
            <person name="Pinter G.L."/>
            <person name="Ricci G."/>
            <person name="Siciliano G."/>
            <person name="Micheli R."/>
            <person name="Annicchiarico G."/>
            <person name="Lattanzi G."/>
            <person name="Nicolotti O."/>
            <person name="Morandi L."/>
            <person name="Bernasconi P."/>
            <person name="Desaphy J.F."/>
            <person name="Mantegazza R."/>
            <person name="Camerino D.C."/>
        </authorList>
    </citation>
    <scope>VARIANTS MCAD PRO-198 AND LEU-484</scope>
    <scope>CHARACTERIZATION OF VARIANTS MCAD PRO-198 AND LEU-484</scope>
    <scope>VARIANTS MCAR PRO-628 AND GLY-640</scope>
    <scope>CHARACTERIZATION OF VARIANTS MCAR PRO-628 AND GLY-640</scope>
</reference>
<reference key="34">
    <citation type="journal article" date="2015" name="NeuroMolecular Med.">
        <title>Clinical, molecular, and functional characterization of CLCN1 mutations in three families with recessive myotonia congenita.</title>
        <authorList>
            <person name="Portaro S."/>
            <person name="Altamura C."/>
            <person name="Licata N."/>
            <person name="Camerino G.M."/>
            <person name="Imbrici P."/>
            <person name="Musumeci O."/>
            <person name="Rodolico C."/>
            <person name="Conte Camerino D."/>
            <person name="Toscano A."/>
            <person name="Desaphy J.F."/>
        </authorList>
    </citation>
    <scope>VARIANTS MCAR ALA-82; SER-190; VAL-270 AND TRP-453</scope>
    <scope>CHARACTERIZATION OF VARIANTS MCAR ALA-82; SER-190; VAL-270 AND TRP-453</scope>
    <scope>FUNCTION</scope>
</reference>
<reference key="35">
    <citation type="journal article" date="2015" name="Sci. Rep.">
        <title>Impaired surface membrane insertion of homo- and heterodimeric human muscle chloride channels carrying amino-terminal myotonia-causing mutations.</title>
        <authorList>
            <person name="Ronstedt K."/>
            <person name="Sternberg D."/>
            <person name="Detro-Dassen S."/>
            <person name="Gramkow T."/>
            <person name="Begemann B."/>
            <person name="Becher T."/>
            <person name="Kilian P."/>
            <person name="Grieschat M."/>
            <person name="Machtens J.P."/>
            <person name="Schmalzing G."/>
            <person name="Fischer M."/>
            <person name="Fahlke C."/>
        </authorList>
    </citation>
    <scope>VARIANTS MCAR ARG-43; LEU-70; ASP-137; HIS-160; SER-496 AND GLU-855</scope>
    <scope>CHARACTERIZATION OF VARIANTS MCAR ARG-43; LEU-70; ASP-137 AND HIS-160</scope>
    <scope>FUNCTION</scope>
    <scope>SUBCELLULAR LOCATION</scope>
    <scope>SUBUNIT</scope>
</reference>
<reference key="36">
    <citation type="journal article" date="2016" name="Hum. Mutat.">
        <title>Identification and functional characterization of CLCN1 mutations found in nondystrophic myotonia patients.</title>
        <authorList>
            <person name="Vindas-Smith R."/>
            <person name="Fiore M."/>
            <person name="Vasquez M."/>
            <person name="Cuenca P."/>
            <person name="Del Valle G."/>
            <person name="Lagostena L."/>
            <person name="Gaitan-Penas H."/>
            <person name="Estevez R."/>
            <person name="Pusch M."/>
            <person name="Morales F."/>
        </authorList>
    </citation>
    <scope>VARIANTS MCAR CYS-105; LEU-167 AND PRO-412</scope>
    <scope>VARIANT ARG-154</scope>
    <scope>CHARACTERIZATION OF VARIANTS MCAR CYS-105; LEU-167 AND PRO-412</scope>
    <scope>CHARACTERIZATION OF VARIANT ARG-154</scope>
    <scope>FUNCTION</scope>
</reference>
<reference key="37">
    <citation type="journal article" date="2016" name="J. Neurol. Sci.">
        <title>A case of non-dystrophic myotonia with concomitant mutations in the SCN4A and CLCN1 genes.</title>
        <authorList>
            <person name="Kato H."/>
            <person name="Kokunai Y."/>
            <person name="Dalle C."/>
            <person name="Kubota T."/>
            <person name="Madokoro Y."/>
            <person name="Yuasa H."/>
            <person name="Uchida Y."/>
            <person name="Ikeda T."/>
            <person name="Mochizuki H."/>
            <person name="Nicole S."/>
            <person name="Fontaine B."/>
            <person name="Takahashi M.P."/>
            <person name="Mitake S."/>
        </authorList>
    </citation>
    <scope>VARIANT MCAD LYS-950</scope>
</reference>
<reference key="38">
    <citation type="journal article" date="2016" name="Neuromuscul. Disord.">
        <title>Thomsen disease with ptosis and abnormal MR findings.</title>
        <authorList>
            <person name="Mori Y."/>
            <person name="Yamashita S."/>
            <person name="Kato M."/>
            <person name="Masuda T."/>
            <person name="Takamatsu K."/>
            <person name="Kumamoto T."/>
            <person name="Sasaki R."/>
            <person name="Ando Y."/>
        </authorList>
    </citation>
    <scope>VARIANT MCAD HIS-480</scope>
    <scope>CHARACTERIZATION OF VARIANT MCAD HIS-480</scope>
</reference>
<comment type="function">
    <text evidence="7 10 12 16 19 20 21 23 24 27 28 31 34 35 39 40 42">Voltage-gated chloride channel involved in skeletal muscle excitability. Generates most of the plasma membrane chloride conductance in skeletal muscle fibers, stabilizes the resting membrane potential and contributes to the repolarization phase during action potential firing (PubMed:12456816, PubMed:16027167, PubMed:22521272, PubMed:22641783, PubMed:26007199, PubMed:26502825, PubMed:26510092, PubMed:7951242, PubMed:8112288, PubMed:8130334, PubMed:9122265, PubMed:9565403, PubMed:9736777). Forms a homodimeric channel where each subunit has its own ion conduction pathway. Conducts double-barreled currents controlled by two types of gates, two fast glutamate gates that control each subunit independently and a slow common gate that opens and shuts off both subunits simultaneously. Has a significant open probability at muscle resting potential and is further activated upon membrane depolarization (PubMed:10051520, PubMed:10962018, PubMed:29809153, PubMed:31022181). Permeable to small monovalent anions with ion selectivity for chloride &gt; thiocyanate &gt; bromide &gt; nitrate &gt; iodide (PubMed:9122265, PubMed:9565403).</text>
</comment>
<comment type="catalytic activity">
    <reaction evidence="20 28 34 35 39 40">
        <text>chloride(in) = chloride(out)</text>
        <dbReference type="Rhea" id="RHEA:29823"/>
        <dbReference type="ChEBI" id="CHEBI:17996"/>
    </reaction>
</comment>
<comment type="catalytic activity">
    <reaction evidence="39 40">
        <text>thiocyanate(in) = thiocyanate(out)</text>
        <dbReference type="Rhea" id="RHEA:75347"/>
        <dbReference type="ChEBI" id="CHEBI:18022"/>
    </reaction>
</comment>
<comment type="catalytic activity">
    <reaction evidence="20 39 40 49">
        <text>bromide(in) = bromide(out)</text>
        <dbReference type="Rhea" id="RHEA:75383"/>
        <dbReference type="ChEBI" id="CHEBI:15858"/>
    </reaction>
</comment>
<comment type="catalytic activity">
    <reaction evidence="20 39 40">
        <text>nitrate(in) = nitrate(out)</text>
        <dbReference type="Rhea" id="RHEA:34923"/>
        <dbReference type="ChEBI" id="CHEBI:17632"/>
    </reaction>
</comment>
<comment type="catalytic activity">
    <reaction evidence="20 39 40 49">
        <text>iodide(out) = iodide(in)</text>
        <dbReference type="Rhea" id="RHEA:66324"/>
        <dbReference type="ChEBI" id="CHEBI:16382"/>
    </reaction>
</comment>
<comment type="activity regulation">
    <text evidence="7 16 28">Modulated by membrane voltage with depolarization favouring channel opening and hyperpolarization favouring channel closure. Inhibited by acidic pH and ATP binding due to a shift of voltage dependence of common gating to more positive voltages. Inhibited by 9-anthracene-carboxylic.</text>
</comment>
<comment type="subunit">
    <text evidence="23 27 28 49">Homodimer.</text>
</comment>
<comment type="interaction">
    <interactant intactId="EBI-10206780">
        <id>P35523</id>
    </interactant>
    <interactant intactId="EBI-743771">
        <id>Q92624</id>
        <label>APPBP2</label>
    </interactant>
    <organismsDiffer>false</organismsDiffer>
    <experiments>6</experiments>
</comment>
<comment type="interaction">
    <interactant intactId="EBI-10206780">
        <id>P35523</id>
    </interactant>
    <interactant intactId="EBI-7062247">
        <id>Q9UHD4</id>
        <label>CIDEB</label>
    </interactant>
    <organismsDiffer>false</organismsDiffer>
    <experiments>3</experiments>
</comment>
<comment type="interaction">
    <interactant intactId="EBI-10206780">
        <id>P35523</id>
    </interactant>
    <interactant intactId="EBI-10175124">
        <id>Q8IZU0</id>
        <label>FAM9B</label>
    </interactant>
    <organismsDiffer>false</organismsDiffer>
    <experiments>3</experiments>
</comment>
<comment type="interaction">
    <interactant intactId="EBI-10206780">
        <id>P35523</id>
    </interactant>
    <interactant intactId="EBI-12859340">
        <id>Q9NQX1-2</id>
        <label>PRDM5</label>
    </interactant>
    <organismsDiffer>false</organismsDiffer>
    <experiments>3</experiments>
</comment>
<comment type="subcellular location">
    <subcellularLocation>
        <location evidence="12 23 34 39">Cell membrane</location>
        <topology evidence="4">Multi-pass membrane protein</topology>
    </subcellularLocation>
    <subcellularLocation>
        <location evidence="3">Cell membrane</location>
        <location evidence="3">Sarcolemma</location>
        <topology evidence="4">Multi-pass membrane protein</topology>
    </subcellularLocation>
    <subcellularLocation>
        <location evidence="3">Cell membrane</location>
        <location evidence="3">Sarcolemma</location>
        <location evidence="3">T-tubule</location>
        <topology evidence="4">Multi-pass membrane protein</topology>
    </subcellularLocation>
</comment>
<comment type="tissue specificity">
    <text>Predominantly expressed in skeletal muscles.</text>
</comment>
<comment type="disease" evidence="7 10 13 22 25 26 29 33 34 36 38 39 41 42">
    <disease id="DI-01216">
        <name>Myotonia congenita, autosomal dominant</name>
        <acronym>MCAD</acronym>
        <description>A non-dystrophic skeletal muscle disorder characterized by muscle stiffness and an inability of the muscle to relax after voluntary contraction. Most patients have symptom onset in the legs, which later progresses to the arms, neck, and facial muscles. Many patients show marked hypertrophy of the lower limb muscles. The autosomal dominant form (Thomsen disease) is less common and less severe than the autosomal recessive one (Becker disease). A milder form of autosomal dominant myotonia is characterized by isolated myotonia without muscle weakness, hypotrophy, or hypertrophy (myotonia levior).</description>
        <dbReference type="MIM" id="160800"/>
    </disease>
    <text>The disease is caused by variants affecting the gene represented in this entry.</text>
</comment>
<comment type="disease" evidence="7 8 9 11 13 14 18 19 20 21 22 23 24 30 31 32 36 37 38 41 42">
    <disease id="DI-01247">
        <name>Myotonia congenita, autosomal recessive</name>
        <acronym>MCAR</acronym>
        <description>A non-dystrophic skeletal muscle disorder characterized by muscle stiffness and an inability of the muscle to relax after voluntary contraction. Most patients have symptom onset in the legs, which later progresses to the arms, neck, and facial muscles. Many patients show marked hypertrophy of the lower limb muscles. The autosomal recessive form (Becker disease) is more severe than the autosomal dominant one (Thomsen disease).</description>
        <dbReference type="MIM" id="255700"/>
    </disease>
    <text>The disease is caused by variants affecting the gene represented in this entry.</text>
</comment>
<comment type="miscellaneous">
    <text evidence="46 47 48">Each monomer is composed of 18 alpha helices arranged in an internal pseudo-symmetry with an inverted membrane orientation. Most helices do not traverse the membrane completely.</text>
</comment>
<comment type="similarity">
    <text evidence="45">Belongs to the chloride channel (TC 2.A.49) family. ClC-1/CLCN1 subfamily.</text>
</comment>
<evidence type="ECO:0000250" key="1"/>
<evidence type="ECO:0000250" key="2">
    <source>
        <dbReference type="UniProtKB" id="P37019"/>
    </source>
</evidence>
<evidence type="ECO:0000250" key="3">
    <source>
        <dbReference type="UniProtKB" id="Q64347"/>
    </source>
</evidence>
<evidence type="ECO:0000255" key="4"/>
<evidence type="ECO:0000255" key="5">
    <source>
        <dbReference type="PROSITE-ProRule" id="PRU00703"/>
    </source>
</evidence>
<evidence type="ECO:0000256" key="6">
    <source>
        <dbReference type="SAM" id="MobiDB-lite"/>
    </source>
</evidence>
<evidence type="ECO:0000269" key="7">
    <source>
    </source>
</evidence>
<evidence type="ECO:0000269" key="8">
    <source>
    </source>
</evidence>
<evidence type="ECO:0000269" key="9">
    <source>
    </source>
</evidence>
<evidence type="ECO:0000269" key="10">
    <source>
    </source>
</evidence>
<evidence type="ECO:0000269" key="11">
    <source>
    </source>
</evidence>
<evidence type="ECO:0000269" key="12">
    <source>
    </source>
</evidence>
<evidence type="ECO:0000269" key="13">
    <source>
    </source>
</evidence>
<evidence type="ECO:0000269" key="14">
    <source>
    </source>
</evidence>
<evidence type="ECO:0000269" key="15">
    <source>
    </source>
</evidence>
<evidence type="ECO:0000269" key="16">
    <source>
    </source>
</evidence>
<evidence type="ECO:0000269" key="17">
    <source>
    </source>
</evidence>
<evidence type="ECO:0000269" key="18">
    <source>
    </source>
</evidence>
<evidence type="ECO:0000269" key="19">
    <source>
    </source>
</evidence>
<evidence type="ECO:0000269" key="20">
    <source>
    </source>
</evidence>
<evidence type="ECO:0000269" key="21">
    <source>
    </source>
</evidence>
<evidence type="ECO:0000269" key="22">
    <source>
    </source>
</evidence>
<evidence type="ECO:0000269" key="23">
    <source>
    </source>
</evidence>
<evidence type="ECO:0000269" key="24">
    <source>
    </source>
</evidence>
<evidence type="ECO:0000269" key="25">
    <source>
    </source>
</evidence>
<evidence type="ECO:0000269" key="26">
    <source>
    </source>
</evidence>
<evidence type="ECO:0000269" key="27">
    <source>
    </source>
</evidence>
<evidence type="ECO:0000269" key="28">
    <source>
    </source>
</evidence>
<evidence type="ECO:0000269" key="29">
    <source>
    </source>
</evidence>
<evidence type="ECO:0000269" key="30">
    <source>
    </source>
</evidence>
<evidence type="ECO:0000269" key="31">
    <source>
    </source>
</evidence>
<evidence type="ECO:0000269" key="32">
    <source>
    </source>
</evidence>
<evidence type="ECO:0000269" key="33">
    <source>
    </source>
</evidence>
<evidence type="ECO:0000269" key="34">
    <source>
    </source>
</evidence>
<evidence type="ECO:0000269" key="35">
    <source>
    </source>
</evidence>
<evidence type="ECO:0000269" key="36">
    <source>
    </source>
</evidence>
<evidence type="ECO:0000269" key="37">
    <source>
    </source>
</evidence>
<evidence type="ECO:0000269" key="38">
    <source>
    </source>
</evidence>
<evidence type="ECO:0000269" key="39">
    <source>
    </source>
</evidence>
<evidence type="ECO:0000269" key="40">
    <source>
    </source>
</evidence>
<evidence type="ECO:0000269" key="41">
    <source>
    </source>
</evidence>
<evidence type="ECO:0000269" key="42">
    <source>
    </source>
</evidence>
<evidence type="ECO:0000303" key="43">
    <source>
    </source>
</evidence>
<evidence type="ECO:0000303" key="44">
    <source>
    </source>
</evidence>
<evidence type="ECO:0000305" key="45"/>
<evidence type="ECO:0000305" key="46">
    <source>
    </source>
</evidence>
<evidence type="ECO:0000305" key="47">
    <source>
    </source>
</evidence>
<evidence type="ECO:0000305" key="48">
    <source>
    </source>
</evidence>
<evidence type="ECO:0000305" key="49">
    <source>
    </source>
</evidence>
<evidence type="ECO:0000312" key="50">
    <source>
        <dbReference type="HGNC" id="HGNC:2019"/>
    </source>
</evidence>
<evidence type="ECO:0007744" key="51">
    <source>
        <dbReference type="PDB" id="6COY"/>
    </source>
</evidence>
<evidence type="ECO:0007744" key="52">
    <source>
        <dbReference type="PDB" id="6QV6"/>
    </source>
</evidence>
<evidence type="ECO:0007829" key="53">
    <source>
        <dbReference type="PDB" id="6COY"/>
    </source>
</evidence>
<evidence type="ECO:0007829" key="54">
    <source>
        <dbReference type="PDB" id="6COZ"/>
    </source>
</evidence>
<evidence type="ECO:0007829" key="55">
    <source>
        <dbReference type="PDB" id="8WXI"/>
    </source>
</evidence>
<protein>
    <recommendedName>
        <fullName>Chloride channel protein 1</fullName>
        <shortName evidence="43">ClC-1</shortName>
    </recommendedName>
    <alternativeName>
        <fullName>Chloride channel protein, skeletal muscle</fullName>
    </alternativeName>
</protein>
<name>CLCN1_HUMAN</name>
<feature type="chain" id="PRO_0000094429" description="Chloride channel protein 1">
    <location>
        <begin position="1"/>
        <end position="988"/>
    </location>
</feature>
<feature type="topological domain" description="Cytoplasmic" evidence="45">
    <location>
        <begin position="1"/>
        <end position="118"/>
    </location>
</feature>
<feature type="transmembrane region" description="Helical" evidence="46 47 48 51 52">
    <location>
        <begin position="119"/>
        <end position="150"/>
    </location>
</feature>
<feature type="topological domain" description="Extracellular" evidence="45">
    <location>
        <begin position="151"/>
        <end position="158"/>
    </location>
</feature>
<feature type="transmembrane region" description="Helical" evidence="46 47 48 51 52">
    <location>
        <begin position="159"/>
        <end position="179"/>
    </location>
</feature>
<feature type="topological domain" description="Cytoplasmic" evidence="45">
    <location>
        <begin position="180"/>
        <end position="183"/>
    </location>
</feature>
<feature type="intramembrane region" description="Note=Loop between two helices" evidence="46 47 48 51 52">
    <location>
        <begin position="184"/>
        <end position="189"/>
    </location>
</feature>
<feature type="intramembrane region" description="Helical" evidence="46 47 48 51 52">
    <location>
        <begin position="190"/>
        <end position="195"/>
    </location>
</feature>
<feature type="topological domain" description="Cytoplasmic" evidence="45">
    <location>
        <begin position="196"/>
        <end position="208"/>
    </location>
</feature>
<feature type="intramembrane region" description="Helical" evidence="46 47 48 51 52">
    <location>
        <begin position="209"/>
        <end position="224"/>
    </location>
</feature>
<feature type="intramembrane region" description="Note=Loop between two helices" evidence="46 47 48 51 52">
    <location>
        <begin position="225"/>
        <end position="230"/>
    </location>
</feature>
<feature type="intramembrane region" description="Helical" evidence="46 47 48 51 52">
    <location>
        <begin position="231"/>
        <end position="246"/>
    </location>
</feature>
<feature type="topological domain" description="Cytoplasmic" evidence="45">
    <location>
        <begin position="247"/>
        <end position="268"/>
    </location>
</feature>
<feature type="intramembrane region" description="Helical" evidence="46 47 48 51 52">
    <location>
        <begin position="269"/>
        <end position="280"/>
    </location>
</feature>
<feature type="intramembrane region" description="Helical" evidence="46 47 48 51 52">
    <location>
        <begin position="281"/>
        <end position="290"/>
    </location>
</feature>
<feature type="topological domain" description="Cytoplasmic" evidence="45">
    <location>
        <begin position="291"/>
        <end position="301"/>
    </location>
</feature>
<feature type="transmembrane region" description="Helical" evidence="46 47 48 51 52">
    <location>
        <begin position="302"/>
        <end position="321"/>
    </location>
</feature>
<feature type="topological domain" description="Extracellular" evidence="45">
    <location>
        <begin position="322"/>
        <end position="347"/>
    </location>
</feature>
<feature type="transmembrane region" description="Helical" evidence="46 47 48 51 52">
    <location>
        <begin position="348"/>
        <end position="376"/>
    </location>
</feature>
<feature type="topological domain" description="Cytoplasmic" evidence="45">
    <location>
        <begin position="377"/>
        <end position="390"/>
    </location>
</feature>
<feature type="transmembrane region" description="Helical" evidence="46 47 48 51 52">
    <location>
        <begin position="391"/>
        <end position="408"/>
    </location>
</feature>
<feature type="topological domain" description="Extracellular" evidence="45">
    <location>
        <begin position="409"/>
        <end position="414"/>
    </location>
</feature>
<feature type="intramembrane region" description="Note=Loop between two helices" evidence="46 47 48 51 52">
    <location>
        <begin position="415"/>
        <end position="418"/>
    </location>
</feature>
<feature type="intramembrane region" description="Helical" evidence="46 47 48 51 52">
    <location>
        <begin position="419"/>
        <end position="426"/>
    </location>
</feature>
<feature type="topological domain" description="Extracellular" evidence="45">
    <location>
        <begin position="427"/>
        <end position="457"/>
    </location>
</feature>
<feature type="intramembrane region" description="Helical" evidence="46 47 48 51 52">
    <location>
        <begin position="458"/>
        <end position="475"/>
    </location>
</feature>
<feature type="intramembrane region" description="Note=Loop between two helices" evidence="46 47 48 51 52">
    <location>
        <begin position="476"/>
        <end position="482"/>
    </location>
</feature>
<feature type="intramembrane region" description="Helical" evidence="46 47 48 51 52">
    <location>
        <begin position="483"/>
        <end position="498"/>
    </location>
</feature>
<feature type="topological domain" description="Extracellular" evidence="45">
    <location>
        <begin position="499"/>
        <end position="521"/>
    </location>
</feature>
<feature type="intramembrane region" description="Helical" evidence="46 47 48 51 52">
    <location>
        <begin position="522"/>
        <end position="538"/>
    </location>
</feature>
<feature type="intramembrane region" description="Note=Loop between two helices" evidence="46 47 48 51 52">
    <location>
        <begin position="539"/>
        <end position="540"/>
    </location>
</feature>
<feature type="intramembrane region" description="Helical" evidence="46 47 48 51 52">
    <location>
        <begin position="541"/>
        <end position="554"/>
    </location>
</feature>
<feature type="topological domain" description="Extracellular" evidence="45">
    <location>
        <begin position="555"/>
        <end position="557"/>
    </location>
</feature>
<feature type="intramembrane region" description="Helical" evidence="46 47 48 51 52">
    <location>
        <begin position="558"/>
        <end position="571"/>
    </location>
</feature>
<feature type="intramembrane region" description="Note=Loop between two helices" evidence="46 47 48 51 52">
    <location>
        <begin position="572"/>
        <end position="575"/>
    </location>
</feature>
<feature type="intramembrane region" description="Helical" evidence="46 47 48 51 52">
    <location>
        <begin position="576"/>
        <end position="578"/>
    </location>
</feature>
<feature type="topological domain" description="Cytoplasmic" evidence="45">
    <location>
        <begin position="579"/>
        <end position="988"/>
    </location>
</feature>
<feature type="domain" description="CBS 1" evidence="5">
    <location>
        <begin position="609"/>
        <end position="668"/>
    </location>
</feature>
<feature type="domain" description="CBS 2" evidence="5">
    <location>
        <begin position="821"/>
        <end position="876"/>
    </location>
</feature>
<feature type="region of interest" description="Disordered" evidence="6">
    <location>
        <begin position="65"/>
        <end position="92"/>
    </location>
</feature>
<feature type="region of interest" description="Disordered" evidence="6">
    <location>
        <begin position="713"/>
        <end position="764"/>
    </location>
</feature>
<feature type="region of interest" description="Disordered" evidence="6">
    <location>
        <begin position="880"/>
        <end position="988"/>
    </location>
</feature>
<feature type="short sequence motif" description="Selectivity filter part_1" evidence="1">
    <location>
        <begin position="188"/>
        <end position="192"/>
    </location>
</feature>
<feature type="short sequence motif" description="Selectivity filter part_2" evidence="1">
    <location>
        <begin position="230"/>
        <end position="234"/>
    </location>
</feature>
<feature type="short sequence motif" description="Selectivity filter part_3" evidence="1">
    <location>
        <begin position="482"/>
        <end position="486"/>
    </location>
</feature>
<feature type="compositionally biased region" description="Basic and acidic residues" evidence="6">
    <location>
        <begin position="65"/>
        <end position="75"/>
    </location>
</feature>
<feature type="compositionally biased region" description="Polar residues" evidence="6">
    <location>
        <begin position="887"/>
        <end position="906"/>
    </location>
</feature>
<feature type="compositionally biased region" description="Pro residues" evidence="6">
    <location>
        <begin position="929"/>
        <end position="941"/>
    </location>
</feature>
<feature type="compositionally biased region" description="Acidic residues" evidence="6">
    <location>
        <begin position="950"/>
        <end position="967"/>
    </location>
</feature>
<feature type="compositionally biased region" description="Acidic residues" evidence="6">
    <location>
        <begin position="979"/>
        <end position="988"/>
    </location>
</feature>
<feature type="binding site" evidence="2">
    <location>
        <position position="189"/>
    </location>
    <ligand>
        <name>chloride</name>
        <dbReference type="ChEBI" id="CHEBI:17996"/>
    </ligand>
</feature>
<feature type="binding site" evidence="2">
    <location>
        <position position="484"/>
    </location>
    <ligand>
        <name>chloride</name>
        <dbReference type="ChEBI" id="CHEBI:17996"/>
    </ligand>
</feature>
<feature type="binding site" evidence="2">
    <location>
        <position position="578"/>
    </location>
    <ligand>
        <name>chloride</name>
        <dbReference type="ChEBI" id="CHEBI:17996"/>
    </ligand>
</feature>
<feature type="site" description="Protopore gate" evidence="46">
    <location>
        <position position="232"/>
    </location>
</feature>
<feature type="modified residue" description="Phosphoserine" evidence="3">
    <location>
        <position position="886"/>
    </location>
</feature>
<feature type="sequence variant" id="VAR_075588" description="In MCAR; decreased chloride transport; decreased localization to the plasma membrane; dominant negative effect on chloride transport and localization to the plasma membrane; no significant effect on chloride channel activity; no effect on homodimerization; dbSNP:rs868831424." evidence="23">
    <original>Q</original>
    <variation>R</variation>
    <location>
        <position position="43"/>
    </location>
</feature>
<feature type="sequence variant" id="VAR_075589" description="In MCAR; uncertain significance; no effect on chloride transport; dbSNP:rs769312894." evidence="23">
    <original>S</original>
    <variation>L</variation>
    <location>
        <position position="70"/>
    </location>
</feature>
<feature type="sequence variant" id="VAR_075590" description="In MCAR; uncertain significance; no effect on chloride transport; dbSNP:rs772100356." evidence="21">
    <original>T</original>
    <variation>A</variation>
    <location>
        <position position="82"/>
    </location>
</feature>
<feature type="sequence variant" id="VAR_001582" description="In MCAR; no effect on chloride transport; dbSNP:rs201509501." evidence="24 36">
    <original>R</original>
    <variation>C</variation>
    <location>
        <position position="105"/>
    </location>
</feature>
<feature type="sequence variant" id="VAR_001583" description="In dbSNP:rs10282312." evidence="15 29">
    <original>G</original>
    <variation>W</variation>
    <location>
        <position position="118"/>
    </location>
</feature>
<feature type="sequence variant" id="VAR_075591" description="In MCAD; dbSNP:rs80356699." evidence="13">
    <original>M</original>
    <variation>V</variation>
    <location>
        <position position="128"/>
    </location>
</feature>
<feature type="sequence variant" id="VAR_001584" description="In MCAR." evidence="32 36">
    <original>D</original>
    <variation>G</variation>
    <location>
        <position position="136"/>
    </location>
</feature>
<feature type="sequence variant" id="VAR_075592" description="In MCAR; reduced chloride transport; decreased localization to the plasma membrane; no significant effect on chloride channel activity; dbSNP:rs748639603." evidence="23">
    <original>Y</original>
    <variation>D</variation>
    <location>
        <position position="137"/>
    </location>
</feature>
<feature type="sequence variant" id="VAR_001585" description="In MCAR." evidence="37">
    <original>Y</original>
    <variation>C</variation>
    <location>
        <position position="150"/>
    </location>
</feature>
<feature type="sequence variant" id="VAR_075593" description="No effect on chloride transport; dbSNP:rs111482384." evidence="24">
    <original>Q</original>
    <variation>R</variation>
    <location>
        <position position="154"/>
    </location>
</feature>
<feature type="sequence variant" id="VAR_075594" description="In MCAR; reduced chloride transport; decreased localization to the plasma membrane; no significant effect on chloride channel activity; dbSNP:rs771532474." evidence="23">
    <original>Q</original>
    <variation>H</variation>
    <location>
        <position position="160"/>
    </location>
</feature>
<feature type="sequence variant" id="VAR_001586" description="In MCAD and MCAR." evidence="41">
    <original>F</original>
    <variation>V</variation>
    <location>
        <position position="161"/>
    </location>
</feature>
<feature type="sequence variant" id="VAR_075595" description="In MCAR; altered chloride channel activity; dbSNP:rs1802429044." evidence="19">
    <original>W</original>
    <variation>R</variation>
    <location>
        <position position="164"/>
    </location>
</feature>
<feature type="sequence variant" id="VAR_001587" description="In MCAR; dbSNP:rs1586485438." evidence="36">
    <original>V</original>
    <variation>G</variation>
    <location>
        <position position="165"/>
    </location>
</feature>
<feature type="sequence variant" id="VAR_001588" description="In MCAR; no effect on chloride transport; dbSNP:rs149729531." evidence="20 24 30 36">
    <original>F</original>
    <variation>L</variation>
    <location>
        <position position="167"/>
    </location>
</feature>
<feature type="sequence variant" id="VAR_075596" description="In MCAR; loss of chloride channel activity; dbSNP:rs797045032." evidence="18 19 21">
    <original>G</original>
    <variation>S</variation>
    <location>
        <position position="190"/>
    </location>
</feature>
<feature type="sequence variant" id="VAR_075597" description="In MCAD; dbSNP:rs80356686." evidence="13">
    <original>E</original>
    <variation>K</variation>
    <location>
        <position position="193"/>
    </location>
</feature>
<feature type="sequence variant" id="VAR_075598" description="In MCAR; changed chloride channel activity." evidence="19">
    <original>I</original>
    <variation>R</variation>
    <location>
        <position position="197"/>
    </location>
</feature>
<feature type="sequence variant" id="VAR_075599" description="In MCAD; reduced chloride transport; changed calcium channel activity; changed gating of the channel; dbSNP:rs1347382107." evidence="22">
    <original>L</original>
    <variation>P</variation>
    <location>
        <position position="198"/>
    </location>
</feature>
<feature type="sequence variant" id="VAR_001589" description="In MCAD and MCAR; dbSNP:rs1563074523." evidence="37">
    <original>G</original>
    <variation>R</variation>
    <location>
        <position position="200"/>
    </location>
</feature>
<feature type="sequence variant" id="VAR_001590" description="In MCAD and MCAR; changed ion selectivity; loss of chloride transport; mild dominant effect; dbSNP:rs80356700." evidence="33 34 39">
    <original>G</original>
    <variation>E</variation>
    <location>
        <position position="230"/>
    </location>
</feature>
<feature type="sequence variant" id="VAR_001591" description="In MCAR; loss of chloride transport; changed calcium channel activity; changed gating of the channel; dbSNP:rs776173406." evidence="42">
    <original>V</original>
    <variation>L</variation>
    <location>
        <position position="236"/>
    </location>
</feature>
<feature type="sequence variant" id="VAR_001592" description="In MCAR; dbSNP:rs200621976." evidence="37">
    <original>Y</original>
    <variation>C</variation>
    <location>
        <position position="261"/>
    </location>
</feature>
<feature type="sequence variant" id="VAR_075600" description="In MCAR; decreased chloride channel activity." evidence="21">
    <original>G</original>
    <variation>V</variation>
    <location>
        <position position="270"/>
    </location>
</feature>
<feature type="sequence variant" id="VAR_075601" description="In MCAR; reduced chloride transport; reduced open probabilities of both protopore and common gating of the channel; leads to a positive shift of the voltage dependence of channel conductance; no effect on protein abundance; dbSNP:rs757109632." evidence="20">
    <original>C</original>
    <variation>R</variation>
    <location>
        <position position="277"/>
    </location>
</feature>
<feature type="sequence variant" id="VAR_075602" description="In MCAR; reduced chloride transport; reduced open probabilities of both protopore and common gating of the channel; leads to a positive shift of the voltage dependence of channel conductance; changed ion selectivity; no effect on protein abundance; dbSNP:rs1802528255." evidence="20">
    <original>C</original>
    <variation>Y</variation>
    <location>
        <position position="277"/>
    </location>
</feature>
<feature type="sequence variant" id="VAR_001593" description="In MCAR; loss of chloride channel activity; dbSNP:rs150885084." evidence="13 42">
    <original>G</original>
    <variation>E</variation>
    <location>
        <position position="285"/>
    </location>
</feature>
<feature type="sequence variant" id="VAR_001594" description="In MCAD; reduced chloride transport; changed calcium channel activity; changed gating of the channel; dominant negative effect; dbSNP:rs80356689." evidence="42">
    <original>V</original>
    <variation>A</variation>
    <location>
        <position position="286"/>
    </location>
</feature>
<feature type="sequence variant" id="VAR_001595" description="In MCAD; reduced chloride transport; changed chloride channel activity; changed gating of the channel; leads to a positive shift of the voltage dependence of channel conductance; decreased open probabilities of fast and slow gates; dominant negative effect; dbSNP:rs80356690." evidence="7 10 29 38">
    <original>I</original>
    <variation>M</variation>
    <location>
        <position position="290"/>
    </location>
</feature>
<feature type="sequence variant" id="VAR_001596" description="In MCAR; loss of calcium channel activity; no dominant negative effect; dbSNP:rs121912805." evidence="36 38">
    <original>E</original>
    <variation>K</variation>
    <location>
        <position position="291"/>
    </location>
</feature>
<feature type="sequence variant" id="VAR_001597" description="No effect on chloride transport; dbSNP:rs118066140." evidence="30 34">
    <original>R</original>
    <variation>Q</variation>
    <location>
        <position position="300"/>
    </location>
</feature>
<feature type="sequence variant" id="VAR_001598" description="In MCAD; reduced chloride transport; changed chloride channel activity; changed gating of the channel; dominant negative effect; dbSNP:rs80356701." evidence="13 42">
    <original>F</original>
    <variation>S</variation>
    <location>
        <position position="307"/>
    </location>
</feature>
<feature type="sequence variant" id="VAR_001599" description="In MCAD and MCAR; dbSNP:rs80356692." evidence="41">
    <original>A</original>
    <variation>T</variation>
    <location>
        <position position="313"/>
    </location>
</feature>
<feature type="sequence variant" id="VAR_001600" description="In MCAD; reduced chloride transport; changed chloride channel activity; changed gating of the channel; dbSNP:rs80356702." evidence="36 38">
    <original>R</original>
    <variation>Q</variation>
    <location>
        <position position="317"/>
    </location>
</feature>
<feature type="sequence variant" id="VAR_001601" description="In MCAR; due to a nucleotide substitution that can affect splicing or results in missense variant I-327; the missense variant does not affect chloride channel activity when expressed in Xenopus oocytes; dbSNP:rs774396430." evidence="31">
    <original>V</original>
    <variation>I</variation>
    <location>
        <position position="327"/>
    </location>
</feature>
<feature type="sequence variant" id="VAR_001602" description="In MCAR." evidence="36">
    <original>I</original>
    <variation>T</variation>
    <location>
        <position position="329"/>
    </location>
</feature>
<feature type="sequence variant" id="VAR_001603" description="In MCAD and MCAR; dbSNP:rs80356703." evidence="30">
    <original>R</original>
    <variation>Q</variation>
    <location>
        <position position="338"/>
    </location>
</feature>
<feature type="sequence variant" id="VAR_075603" description="In MCAR; loss of chloride transport; decreased localization to the plasma membrane; loss of homodimerization; might be degraded; dbSNP:rs1279658001." evidence="24">
    <original>Q</original>
    <variation>P</variation>
    <location>
        <position position="412"/>
    </location>
</feature>
<feature type="sequence variant" id="VAR_001604" description="In MCAR; dbSNP:rs121912799." evidence="14 31 36">
    <original>F</original>
    <variation>C</variation>
    <location>
        <position position="413"/>
    </location>
</feature>
<feature type="sequence variant" id="VAR_001605" description="In MCAR; dbSNP:rs2116854732." evidence="37">
    <original>A</original>
    <variation>V</variation>
    <location>
        <position position="415"/>
    </location>
</feature>
<feature type="sequence variant" id="VAR_001606" description="In dbSNP:rs41276054." evidence="13">
    <original>A</original>
    <variation>T</variation>
    <location>
        <position position="437"/>
    </location>
</feature>
<feature type="sequence variant" id="VAR_075604" description="In MCAR; uncertain significance; no effect on chloride channel activity; dbSNP:rs376026619." evidence="21">
    <original>R</original>
    <variation>W</variation>
    <location>
        <position position="453"/>
    </location>
</feature>
<feature type="sequence variant" id="VAR_077244" description="In MCAD; decreased protein abundance; dbSNP:rs80356694." evidence="26">
    <original>P</original>
    <variation>H</variation>
    <location>
        <position position="480"/>
    </location>
</feature>
<feature type="sequence variant" id="VAR_001607" description="In MCAD; loss of chloride transport; changed chloride channel activity; changed gating of the channel; dominant effect; dbSNP:rs80356694." evidence="13 34 38">
    <original>P</original>
    <variation>L</variation>
    <location>
        <position position="480"/>
    </location>
</feature>
<feature type="sequence variant" id="VAR_001608" description="In MCAR; dbSNP:rs746125212." evidence="36">
    <original>G</original>
    <variation>R</variation>
    <location>
        <position position="482"/>
    </location>
</feature>
<feature type="sequence variant" id="VAR_075605" description="In MCAD; reduced chloride transport; changed calcium channel activity; changed channel gating; no dominant negative effect; dbSNP:rs1312002847." evidence="22">
    <original>F</original>
    <variation>L</variation>
    <location>
        <position position="484"/>
    </location>
</feature>
<feature type="sequence variant" id="VAR_001609" description="In MCAR; dbSNP:rs146457619." evidence="36 42">
    <original>M</original>
    <variation>V</variation>
    <location>
        <position position="485"/>
    </location>
</feature>
<feature type="sequence variant" id="VAR_001610" description="In MCAR; loss of chloride channel activity; recessive; dbSNP:rs121912801." evidence="23 31">
    <original>R</original>
    <variation>S</variation>
    <location>
        <position position="496"/>
    </location>
</feature>
<feature type="sequence variant" id="VAR_075606" description="In MCAR; reduced chloride transport; changed calcium channel activity; changed channel gating; dbSNP:rs121912807." evidence="9">
    <original>G</original>
    <variation>R</variation>
    <location>
        <position position="499"/>
    </location>
</feature>
<feature type="sequence variant" id="VAR_075607" description="In MCAR; uncertain significance; dbSNP:rs1319653705." evidence="20">
    <original>I</original>
    <variation>T</variation>
    <location>
        <position position="527"/>
    </location>
</feature>
<feature type="sequence variant" id="VAR_075608" description="In MCAR; uncertain significance." evidence="19">
    <original>T</original>
    <variation>I</variation>
    <location>
        <position position="533"/>
    </location>
</feature>
<feature type="sequence variant" id="VAR_075609" description="In MCAR; uncertain significance; dbSNP:rs777685454." evidence="19">
    <original>V</original>
    <variation>L</variation>
    <location>
        <position position="536"/>
    </location>
</feature>
<feature type="sequence variant" id="VAR_036300" description="In a breast cancer sample; somatic mutation; dbSNP:rs546411827." evidence="17">
    <original>E</original>
    <variation>K</variation>
    <location>
        <position position="548"/>
    </location>
</feature>
<feature type="sequence variant" id="VAR_001611" description="In MCAD and MCAR; also found in myotonia levior; reduced chloride transport; changed calcium channel activity; changed channel gating; weak dominant negative effect; dbSNP:rs80356696." evidence="12 29 38">
    <original>Q</original>
    <variation>R</variation>
    <location>
        <position position="552"/>
    </location>
</feature>
<feature type="sequence variant" id="VAR_001612" description="In MCAD and MCAR; mild form; reduced chloride transport; changed chloride channel activity; changed gating of the channel; leads to a positive shift of the voltage dependence of channel conductance; partial dominant negative effect; dbSNP:rs80356697." evidence="7 41 42">
    <original>I</original>
    <variation>N</variation>
    <location>
        <position position="556"/>
    </location>
</feature>
<feature type="sequence variant" id="VAR_001613" description="In MCAR." evidence="8">
    <original>V</original>
    <variation>I</variation>
    <location>
        <position position="563"/>
    </location>
</feature>
<feature type="sequence variant" id="VAR_075610" description="In dbSNP:rs140205115." evidence="13">
    <original>K</original>
    <variation>N</variation>
    <location>
        <position position="614"/>
    </location>
</feature>
<feature type="sequence variant" id="VAR_075611" description="In MCAR; uncertain significance; no effect on calcium channel activity." evidence="22">
    <original>L</original>
    <variation>P</variation>
    <location>
        <position position="628"/>
    </location>
</feature>
<feature type="sequence variant" id="VAR_075612" description="In MCAR; reduced calcium channel activity; dbSNP:rs1803111906." evidence="22">
    <original>V</original>
    <variation>G</variation>
    <location>
        <position position="640"/>
    </location>
</feature>
<feature type="sequence variant" id="VAR_001614" description="In MCAR." evidence="8">
    <original>F</original>
    <variation>L</variation>
    <location>
        <position position="708"/>
    </location>
</feature>
<feature type="sequence variant" id="VAR_047779" description="In dbSNP:rs13438232.">
    <original>P</original>
    <variation>L</variation>
    <location>
        <position position="727"/>
    </location>
</feature>
<feature type="sequence variant" id="VAR_075613" description="In MCAR; uncertain significance; no effect on chloride channel activity; dbSNP:rs755433272." evidence="19">
    <original>G</original>
    <variation>S</variation>
    <location>
        <position position="845"/>
    </location>
</feature>
<feature type="sequence variant" id="VAR_075614" description="In MCAR; uncertain significance; dbSNP:rs1554439879." evidence="23">
    <original>G</original>
    <variation>E</variation>
    <location>
        <position position="855"/>
    </location>
</feature>
<feature type="sequence variant" id="VAR_075615" description="In MCAR; uncertain significance; dbSNP:rs80356706." evidence="11">
    <original>P</original>
    <variation>L</variation>
    <location>
        <position position="932"/>
    </location>
</feature>
<feature type="sequence variant" id="VAR_075616" description="In MCAR; uncertain significance." evidence="19">
    <original>V</original>
    <variation>E</variation>
    <location>
        <position position="947"/>
    </location>
</feature>
<feature type="sequence variant" id="VAR_079520" description="In MCAD; uncertain significance; dbSNP:rs201506176." evidence="25">
    <original>E</original>
    <variation>K</variation>
    <location>
        <position position="950"/>
    </location>
</feature>
<feature type="mutagenesis site" description="Changed chloride channel activity; changed gating of the channel." evidence="38">
    <original>I</original>
    <variation>C</variation>
    <variation>E</variation>
    <variation>F</variation>
    <variation>G</variation>
    <variation>K</variation>
    <variation>L</variation>
    <variation>Q</variation>
    <variation>T</variation>
    <variation>V</variation>
    <variation>Y</variation>
    <location>
        <position position="290"/>
    </location>
</feature>
<feature type="mutagenesis site" description="No effect on calcium channel activity." evidence="38">
    <original>E</original>
    <variation>D</variation>
    <location>
        <position position="291"/>
    </location>
</feature>
<feature type="mutagenesis site" description="Loss of calcium channel activity." evidence="38">
    <original>E</original>
    <variation>L</variation>
    <location>
        <position position="291"/>
    </location>
</feature>
<feature type="mutagenesis site" description="Changed gating of the channel." evidence="9">
    <original>R</original>
    <variation>K</variation>
    <location>
        <position position="496"/>
    </location>
</feature>
<feature type="mutagenesis site" description="Changed gating of the channel." evidence="9">
    <original>G</original>
    <variation>K</variation>
    <variation>E</variation>
    <location>
        <position position="499"/>
    </location>
</feature>
<feature type="mutagenesis site" description="No effect on gating of the channel." evidence="9">
    <original>G</original>
    <variation>Q</variation>
    <location>
        <position position="499"/>
    </location>
</feature>
<feature type="mutagenesis site" description="No effect on channel function." evidence="9">
    <original>E</original>
    <variation>Q</variation>
    <location>
        <position position="500"/>
    </location>
</feature>
<feature type="mutagenesis site" description="Reduces the effect of adenosine nucleotides on common gate." evidence="16">
    <original>T</original>
    <variation>A</variation>
    <location>
        <position position="636"/>
    </location>
</feature>
<feature type="mutagenesis site" description="Reduces the effect of adenosine nucleotides on common gate." evidence="16">
    <original>P</original>
    <variation>A</variation>
    <location>
        <position position="638"/>
    </location>
</feature>
<feature type="mutagenesis site" description="Has normal sensitivity to adenosine nucleotides." evidence="16">
    <original>S</original>
    <variation>A</variation>
    <location>
        <position position="651"/>
    </location>
</feature>
<feature type="mutagenesis site" description="Reduces the effect of adenosine nucleotides on common gate." evidence="16">
    <original>H</original>
    <variation>A</variation>
    <location>
        <position position="847"/>
    </location>
</feature>
<feature type="mutagenesis site" description="Abrogates the effect of adenosine nucleotides on common gate." evidence="16">
    <original>L</original>
    <variation>A</variation>
    <location>
        <position position="848"/>
    </location>
</feature>
<feature type="mutagenesis site" description="Has normal sensitivity to adenosine nucleotides." evidence="16">
    <original>A</original>
    <variation>V</variation>
    <location>
        <position position="849"/>
    </location>
</feature>
<feature type="sequence conflict" description="In Ref. 1; CAA80996/CAA81103." evidence="45" ref="1">
    <original>L</original>
    <variation>P</variation>
    <location>
        <position position="697"/>
    </location>
</feature>
<feature type="helix" evidence="55">
    <location>
        <begin position="116"/>
        <end position="152"/>
    </location>
</feature>
<feature type="helix" evidence="55">
    <location>
        <begin position="157"/>
        <end position="181"/>
    </location>
</feature>
<feature type="helix" evidence="53">
    <location>
        <begin position="184"/>
        <end position="186"/>
    </location>
</feature>
<feature type="helix" evidence="55">
    <location>
        <begin position="191"/>
        <end position="198"/>
    </location>
</feature>
<feature type="turn" evidence="55">
    <location>
        <begin position="204"/>
        <end position="207"/>
    </location>
</feature>
<feature type="helix" evidence="55">
    <location>
        <begin position="209"/>
        <end position="223"/>
    </location>
</feature>
<feature type="turn" evidence="53">
    <location>
        <begin position="224"/>
        <end position="226"/>
    </location>
</feature>
<feature type="turn" evidence="55">
    <location>
        <begin position="232"/>
        <end position="234"/>
    </location>
</feature>
<feature type="helix" evidence="55">
    <location>
        <begin position="235"/>
        <end position="250"/>
    </location>
</feature>
<feature type="helix" evidence="55">
    <location>
        <begin position="263"/>
        <end position="279"/>
    </location>
</feature>
<feature type="helix" evidence="55">
    <location>
        <begin position="282"/>
        <end position="292"/>
    </location>
</feature>
<feature type="strand" evidence="53">
    <location>
        <begin position="293"/>
        <end position="298"/>
    </location>
</feature>
<feature type="helix" evidence="55">
    <location>
        <begin position="299"/>
        <end position="322"/>
    </location>
</feature>
<feature type="strand" evidence="55">
    <location>
        <begin position="327"/>
        <end position="333"/>
    </location>
</feature>
<feature type="strand" evidence="53">
    <location>
        <begin position="339"/>
        <end position="341"/>
    </location>
</feature>
<feature type="turn" evidence="55">
    <location>
        <begin position="345"/>
        <end position="347"/>
    </location>
</feature>
<feature type="helix" evidence="55">
    <location>
        <begin position="348"/>
        <end position="378"/>
    </location>
</feature>
<feature type="helix" evidence="55">
    <location>
        <begin position="380"/>
        <end position="388"/>
    </location>
</feature>
<feature type="helix" evidence="55">
    <location>
        <begin position="392"/>
        <end position="404"/>
    </location>
</feature>
<feature type="turn" evidence="55">
    <location>
        <begin position="407"/>
        <end position="415"/>
    </location>
</feature>
<feature type="helix" evidence="55">
    <location>
        <begin position="420"/>
        <end position="427"/>
    </location>
</feature>
<feature type="turn" evidence="55">
    <location>
        <begin position="433"/>
        <end position="437"/>
    </location>
</feature>
<feature type="strand" evidence="55">
    <location>
        <begin position="441"/>
        <end position="443"/>
    </location>
</feature>
<feature type="helix" evidence="55">
    <location>
        <begin position="444"/>
        <end position="447"/>
    </location>
</feature>
<feature type="strand" evidence="55">
    <location>
        <begin position="448"/>
        <end position="450"/>
    </location>
</feature>
<feature type="strand" evidence="55">
    <location>
        <begin position="452"/>
        <end position="454"/>
    </location>
</feature>
<feature type="helix" evidence="55">
    <location>
        <begin position="456"/>
        <end position="474"/>
    </location>
</feature>
<feature type="strand" evidence="55">
    <location>
        <begin position="475"/>
        <end position="480"/>
    </location>
</feature>
<feature type="helix" evidence="55">
    <location>
        <begin position="484"/>
        <end position="505"/>
    </location>
</feature>
<feature type="strand" evidence="55">
    <location>
        <begin position="510"/>
        <end position="514"/>
    </location>
</feature>
<feature type="strand" evidence="53">
    <location>
        <begin position="515"/>
        <end position="517"/>
    </location>
</feature>
<feature type="helix" evidence="55">
    <location>
        <begin position="521"/>
        <end position="537"/>
    </location>
</feature>
<feature type="helix" evidence="55">
    <location>
        <begin position="542"/>
        <end position="550"/>
    </location>
</feature>
<feature type="helix" evidence="55">
    <location>
        <begin position="556"/>
        <end position="571"/>
    </location>
</feature>
<feature type="helix" evidence="55">
    <location>
        <begin position="577"/>
        <end position="584"/>
    </location>
</feature>
<feature type="helix" evidence="54">
    <location>
        <begin position="605"/>
        <end position="608"/>
    </location>
</feature>
<feature type="strand" evidence="54">
    <location>
        <begin position="609"/>
        <end position="611"/>
    </location>
</feature>
<feature type="helix" evidence="54">
    <location>
        <begin position="622"/>
        <end position="631"/>
    </location>
</feature>
<feature type="strand" evidence="54">
    <location>
        <begin position="635"/>
        <end position="641"/>
    </location>
</feature>
<feature type="turn" evidence="54">
    <location>
        <begin position="643"/>
        <end position="645"/>
    </location>
</feature>
<feature type="strand" evidence="54">
    <location>
        <begin position="647"/>
        <end position="653"/>
    </location>
</feature>
<feature type="helix" evidence="54">
    <location>
        <begin position="654"/>
        <end position="665"/>
    </location>
</feature>
<feature type="helix" evidence="54">
    <location>
        <begin position="799"/>
        <end position="810"/>
    </location>
</feature>
<feature type="helix" evidence="54">
    <location>
        <begin position="834"/>
        <end position="843"/>
    </location>
</feature>
<feature type="strand" evidence="54">
    <location>
        <begin position="851"/>
        <end position="853"/>
    </location>
</feature>
<feature type="strand" evidence="54">
    <location>
        <begin position="856"/>
        <end position="860"/>
    </location>
</feature>
<feature type="helix" evidence="54">
    <location>
        <begin position="863"/>
        <end position="875"/>
    </location>
</feature>
<proteinExistence type="evidence at protein level"/>
<accession>P35523</accession>
<accession>A4D2H5</accession>
<accession>Q2M202</accession>
<organism>
    <name type="scientific">Homo sapiens</name>
    <name type="common">Human</name>
    <dbReference type="NCBI Taxonomy" id="9606"/>
    <lineage>
        <taxon>Eukaryota</taxon>
        <taxon>Metazoa</taxon>
        <taxon>Chordata</taxon>
        <taxon>Craniata</taxon>
        <taxon>Vertebrata</taxon>
        <taxon>Euteleostomi</taxon>
        <taxon>Mammalia</taxon>
        <taxon>Eutheria</taxon>
        <taxon>Euarchontoglires</taxon>
        <taxon>Primates</taxon>
        <taxon>Haplorrhini</taxon>
        <taxon>Catarrhini</taxon>
        <taxon>Hominidae</taxon>
        <taxon>Homo</taxon>
    </lineage>
</organism>
<keyword id="KW-0002">3D-structure</keyword>
<keyword id="KW-0129">CBS domain</keyword>
<keyword id="KW-1003">Cell membrane</keyword>
<keyword id="KW-0868">Chloride</keyword>
<keyword id="KW-0869">Chloride channel</keyword>
<keyword id="KW-0225">Disease variant</keyword>
<keyword id="KW-0407">Ion channel</keyword>
<keyword id="KW-0406">Ion transport</keyword>
<keyword id="KW-0472">Membrane</keyword>
<keyword id="KW-0597">Phosphoprotein</keyword>
<keyword id="KW-1267">Proteomics identification</keyword>
<keyword id="KW-1185">Reference proteome</keyword>
<keyword id="KW-0677">Repeat</keyword>
<keyword id="KW-0812">Transmembrane</keyword>
<keyword id="KW-1133">Transmembrane helix</keyword>
<keyword id="KW-0813">Transport</keyword>
<keyword id="KW-0851">Voltage-gated channel</keyword>